<reference key="1">
    <citation type="journal article" date="2001" name="J. Gen. Virol.">
        <title>Comparison of genomic and predicted amino acid sequences of respiratory and enteric bovine coronaviruses isolated from the same animal with fatal shipping pneumonia.</title>
        <authorList>
            <person name="Chouljenko V.N."/>
            <person name="Lin X.Q."/>
            <person name="Storz J."/>
            <person name="Kousoulas K.G."/>
            <person name="Gorbalenya A.E."/>
        </authorList>
    </citation>
    <scope>NUCLEOTIDE SEQUENCE [GENOMIC RNA]</scope>
</reference>
<feature type="chain" id="PRO_0000037229" description="Host translation inhibitor nsp1" evidence="2">
    <location>
        <begin position="1"/>
        <end position="246"/>
    </location>
</feature>
<feature type="chain" id="PRO_0000037230" description="Non-structural protein 2" evidence="2">
    <location>
        <begin position="247"/>
        <end position="851"/>
    </location>
</feature>
<feature type="chain" id="PRO_0000037231" description="Papain-like proteinase nsp3" evidence="2">
    <location>
        <begin position="852"/>
        <end position="2750"/>
    </location>
</feature>
<feature type="chain" id="PRO_0000037232" description="Non-structural protein 4" evidence="2">
    <location>
        <begin position="2751"/>
        <end position="3246"/>
    </location>
</feature>
<feature type="chain" id="PRO_0000037233" description="3C-like proteinase nsp5" evidence="2">
    <location>
        <begin position="3247"/>
        <end position="3549"/>
    </location>
</feature>
<feature type="chain" id="PRO_0000037234" description="Non-structural protein 6" evidence="2">
    <location>
        <begin position="3550"/>
        <end position="3836"/>
    </location>
</feature>
<feature type="chain" id="PRO_0000037235" description="Non-structural protein 7" evidence="2">
    <location>
        <begin position="3837"/>
        <end position="3925"/>
    </location>
</feature>
<feature type="chain" id="PRO_0000037236" description="Non-structural protein 8" evidence="2">
    <location>
        <begin position="3926"/>
        <end position="4122"/>
    </location>
</feature>
<feature type="chain" id="PRO_0000037237" description="Viral protein genome-linked nsp9" evidence="2">
    <location>
        <begin position="4123"/>
        <end position="4232"/>
    </location>
</feature>
<feature type="chain" id="PRO_0000037238" description="Non-structural protein 10" evidence="2">
    <location>
        <begin position="4233"/>
        <end position="4369"/>
    </location>
</feature>
<feature type="chain" id="PRO_0000037239" description="RNA-directed RNA polymerase nsp12" evidence="2">
    <location>
        <begin position="4370"/>
        <end position="5297"/>
    </location>
</feature>
<feature type="chain" id="PRO_0000037240" description="Helicase nsp13" evidence="2">
    <location>
        <begin position="5298"/>
        <end position="5900"/>
    </location>
</feature>
<feature type="chain" id="PRO_0000037241" description="Guanine-N7 methyltransferase nsp14" evidence="2">
    <location>
        <begin position="5901"/>
        <end position="6421"/>
    </location>
</feature>
<feature type="chain" id="PRO_0000037242" description="Uridylate-specific endoribonuclease nsp15" evidence="2">
    <location>
        <begin position="6422"/>
        <end position="6795"/>
    </location>
</feature>
<feature type="chain" id="PRO_0000037243" description="2'-O-methyltransferase" evidence="2">
    <location>
        <begin position="6796"/>
        <end position="7094"/>
    </location>
</feature>
<feature type="transmembrane region" description="Helical" evidence="4">
    <location>
        <begin position="2138"/>
        <end position="2158"/>
    </location>
</feature>
<feature type="transmembrane region" description="Helical" evidence="4">
    <location>
        <begin position="2199"/>
        <end position="2219"/>
    </location>
</feature>
<feature type="transmembrane region" description="Helical" evidence="4">
    <location>
        <begin position="2227"/>
        <end position="2247"/>
    </location>
</feature>
<feature type="transmembrane region" description="Helical" evidence="4">
    <location>
        <begin position="2313"/>
        <end position="2333"/>
    </location>
</feature>
<feature type="transmembrane region" description="Helical" evidence="4">
    <location>
        <begin position="2343"/>
        <end position="2363"/>
    </location>
</feature>
<feature type="transmembrane region" description="Helical" evidence="4">
    <location>
        <begin position="2365"/>
        <end position="2385"/>
    </location>
</feature>
<feature type="transmembrane region" description="Helical" evidence="4">
    <location>
        <begin position="2752"/>
        <end position="2772"/>
    </location>
</feature>
<feature type="transmembrane region" description="Helical" evidence="4">
    <location>
        <begin position="2824"/>
        <end position="2844"/>
    </location>
</feature>
<feature type="transmembrane region" description="Helical" evidence="4">
    <location>
        <begin position="3009"/>
        <end position="3029"/>
    </location>
</feature>
<feature type="transmembrane region" description="Helical" evidence="4">
    <location>
        <begin position="3031"/>
        <end position="3051"/>
    </location>
</feature>
<feature type="transmembrane region" description="Helical" evidence="4">
    <location>
        <begin position="3063"/>
        <end position="3083"/>
    </location>
</feature>
<feature type="transmembrane region" description="Helical" evidence="4">
    <location>
        <begin position="3090"/>
        <end position="3110"/>
    </location>
</feature>
<feature type="transmembrane region" description="Helical" evidence="4">
    <location>
        <begin position="3115"/>
        <end position="3135"/>
    </location>
</feature>
<feature type="transmembrane region" description="Helical" evidence="4">
    <location>
        <begin position="3558"/>
        <end position="3578"/>
    </location>
</feature>
<feature type="transmembrane region" description="Helical" evidence="4">
    <location>
        <begin position="3588"/>
        <end position="3608"/>
    </location>
</feature>
<feature type="transmembrane region" description="Helical" evidence="4">
    <location>
        <begin position="3614"/>
        <end position="3634"/>
    </location>
</feature>
<feature type="transmembrane region" description="Helical" evidence="4">
    <location>
        <begin position="3657"/>
        <end position="3677"/>
    </location>
</feature>
<feature type="transmembrane region" description="Helical" evidence="4">
    <location>
        <begin position="3684"/>
        <end position="3704"/>
    </location>
</feature>
<feature type="transmembrane region" description="Helical" evidence="4">
    <location>
        <begin position="3711"/>
        <end position="3731"/>
    </location>
</feature>
<feature type="transmembrane region" description="Helical" evidence="4">
    <location>
        <begin position="3755"/>
        <end position="3775"/>
    </location>
</feature>
<feature type="domain" description="CoV Nsp1 globular" evidence="26">
    <location>
        <begin position="54"/>
        <end position="196"/>
    </location>
</feature>
<feature type="domain" description="BetaCoV Nsp1 C-terminal" evidence="27">
    <location>
        <begin position="216"/>
        <end position="246"/>
    </location>
</feature>
<feature type="domain" description="CoV Nsp2 N-terminal" evidence="28">
    <location>
        <begin position="250"/>
        <end position="519"/>
    </location>
</feature>
<feature type="domain" description="CoV Nsp2 middle" evidence="29">
    <location>
        <begin position="524"/>
        <end position="713"/>
    </location>
</feature>
<feature type="domain" description="CoV Nsp2 C-terminal" evidence="30">
    <location>
        <begin position="733"/>
        <end position="851"/>
    </location>
</feature>
<feature type="domain" description="Ubiquitin-like 1" evidence="5">
    <location>
        <begin position="853"/>
        <end position="966"/>
    </location>
</feature>
<feature type="domain" description="Peptidase C16 1" evidence="6">
    <location>
        <begin position="1036"/>
        <end position="1274"/>
    </location>
</feature>
<feature type="domain" description="Macro" evidence="7">
    <location>
        <begin position="1275"/>
        <end position="1435"/>
    </location>
</feature>
<feature type="domain" description="DPUP" evidence="11">
    <location>
        <begin position="1491"/>
        <end position="1563"/>
    </location>
</feature>
<feature type="domain" description="Ubiquitin-like 2" evidence="5">
    <location>
        <begin position="1562"/>
        <end position="1617"/>
    </location>
</feature>
<feature type="domain" description="Peptidase C16 2" evidence="6">
    <location>
        <begin position="1631"/>
        <end position="1892"/>
    </location>
</feature>
<feature type="domain" description="Nucleic acid-binding" evidence="12">
    <location>
        <begin position="1906"/>
        <end position="2007"/>
    </location>
</feature>
<feature type="domain" description="G2M" evidence="33">
    <location>
        <begin position="2020"/>
        <end position="2169"/>
    </location>
</feature>
<feature type="domain" description="3Ecto" evidence="32">
    <location>
        <begin position="2235"/>
        <end position="2296"/>
    </location>
</feature>
<feature type="domain" description="CoV Nsp3 Y" evidence="31">
    <location>
        <begin position="2383"/>
        <end position="2750"/>
    </location>
</feature>
<feature type="domain" description="Nsp4C" evidence="13">
    <location>
        <begin position="3149"/>
        <end position="3246"/>
    </location>
</feature>
<feature type="domain" description="Peptidase C30" evidence="9">
    <location>
        <begin position="3247"/>
        <end position="3549"/>
    </location>
</feature>
<feature type="domain" description="RdRp Nsp7 cofactor" evidence="16">
    <location>
        <begin position="3837"/>
        <end position="3925"/>
    </location>
</feature>
<feature type="domain" description="RdRp Nsp8 cofactor" evidence="17">
    <location>
        <begin position="3926"/>
        <end position="4122"/>
    </location>
</feature>
<feature type="domain" description="Nsp9 ssRNA-binding" evidence="18">
    <location>
        <begin position="4123"/>
        <end position="4232"/>
    </location>
</feature>
<feature type="domain" description="ExoN/MTase coactivator" evidence="19">
    <location>
        <begin position="4233"/>
        <end position="4370"/>
    </location>
</feature>
<feature type="domain" description="NiRAN" evidence="14">
    <location>
        <begin position="4375"/>
        <end position="4630"/>
    </location>
</feature>
<feature type="domain" description="Nsp12 Interface" evidence="34">
    <location>
        <begin position="4631"/>
        <end position="4729"/>
    </location>
</feature>
<feature type="domain" description="Nsp12 RNA-dependent RNA polymerase" evidence="15">
    <location>
        <begin position="4730"/>
        <end position="5297"/>
    </location>
</feature>
<feature type="domain" description="RdRp catalytic" evidence="8">
    <location>
        <begin position="4977"/>
        <end position="5139"/>
    </location>
</feature>
<feature type="domain" description="CV ZBD" evidence="10">
    <location>
        <begin position="5298"/>
        <end position="5410"/>
    </location>
</feature>
<feature type="domain" description="(+)RNA virus helicase ATP-binding">
    <location>
        <begin position="5553"/>
        <end position="5734"/>
    </location>
</feature>
<feature type="domain" description="(+)RNA virus helicase C-terminal">
    <location>
        <begin position="5735"/>
        <end position="5904"/>
    </location>
</feature>
<feature type="domain" description="ExoN" evidence="20">
    <location>
        <begin position="5971"/>
        <end position="6186"/>
    </location>
</feature>
<feature type="domain" description="N7-MTase" evidence="21">
    <location>
        <begin position="6195"/>
        <end position="6421"/>
    </location>
</feature>
<feature type="domain" description="Nsp15 N-terminal oligomerization" evidence="24">
    <location>
        <begin position="6422"/>
        <end position="6482"/>
    </location>
</feature>
<feature type="domain" description="AV-Nsp11N/CoV-Nsp15M" evidence="25">
    <location>
        <begin position="6483"/>
        <end position="6603"/>
    </location>
</feature>
<feature type="domain" description="NendoU" evidence="23">
    <location>
        <begin position="6653"/>
        <end position="6792"/>
    </location>
</feature>
<feature type="domain" description="Nidovirus-type SAM-dependent 2'-O-MTase" evidence="22">
    <location>
        <begin position="6797"/>
        <end position="7091"/>
    </location>
</feature>
<feature type="zinc finger region" description="C4-type 1" evidence="6">
    <location>
        <begin position="1151"/>
        <end position="1179"/>
    </location>
</feature>
<feature type="zinc finger region" description="C4-type 2" evidence="6">
    <location>
        <begin position="1749"/>
        <end position="1785"/>
    </location>
</feature>
<feature type="zinc finger region" evidence="1">
    <location>
        <begin position="4306"/>
        <end position="4322"/>
    </location>
</feature>
<feature type="zinc finger region" evidence="1">
    <location>
        <begin position="4348"/>
        <end position="4361"/>
    </location>
</feature>
<feature type="region of interest" description="C4" evidence="28">
    <location>
        <begin position="392"/>
        <end position="416"/>
    </location>
</feature>
<feature type="region of interest" description="HD1">
    <location>
        <begin position="2138"/>
        <end position="2385"/>
    </location>
</feature>
<feature type="region of interest" description="Y1" evidence="31">
    <location>
        <begin position="2383"/>
        <end position="2473"/>
    </location>
</feature>
<feature type="region of interest" description="ZF1" evidence="31">
    <location>
        <begin position="2387"/>
        <end position="2400"/>
    </location>
</feature>
<feature type="region of interest" description="ZF2" evidence="31">
    <location>
        <begin position="2433"/>
        <end position="2443"/>
    </location>
</feature>
<feature type="region of interest" description="CoV-Y" evidence="31">
    <location>
        <begin position="2474"/>
        <end position="2750"/>
    </location>
</feature>
<feature type="region of interest" description="Y2" evidence="31">
    <location>
        <begin position="2474"/>
        <end position="2566"/>
    </location>
</feature>
<feature type="region of interest" description="Y3" evidence="31">
    <location>
        <begin position="2567"/>
        <end position="2649"/>
    </location>
</feature>
<feature type="region of interest" description="Y4" evidence="31">
    <location>
        <begin position="2650"/>
        <end position="2750"/>
    </location>
</feature>
<feature type="region of interest" description="HD2">
    <location>
        <begin position="2752"/>
        <end position="3135"/>
    </location>
</feature>
<feature type="region of interest" description="HD3">
    <location>
        <begin position="3558"/>
        <end position="3775"/>
    </location>
</feature>
<feature type="region of interest" description="RdRp Fingers N-ter" evidence="15">
    <location>
        <begin position="4732"/>
        <end position="4946"/>
    </location>
</feature>
<feature type="region of interest" description="RdRp Palm N-ter" evidence="15">
    <location>
        <begin position="4947"/>
        <end position="4985"/>
    </location>
</feature>
<feature type="region of interest" description="RdRp Fingers C-ter" evidence="15">
    <location>
        <begin position="4986"/>
        <end position="5044"/>
    </location>
</feature>
<feature type="region of interest" description="RdRp Palm C-ter" evidence="15">
    <location>
        <begin position="5045"/>
        <end position="5180"/>
    </location>
</feature>
<feature type="region of interest" description="RdRp Thumb" evidence="15">
    <location>
        <begin position="5181"/>
        <end position="5297"/>
    </location>
</feature>
<feature type="region of interest" description="GpppA-binding" evidence="21">
    <location>
        <begin position="6308"/>
        <end position="6322"/>
    </location>
</feature>
<feature type="active site" description="For PL1-PRO activity" evidence="6">
    <location>
        <position position="1074"/>
    </location>
</feature>
<feature type="active site" description="For PL1-PRO activity" evidence="6">
    <location>
        <position position="1225"/>
    </location>
</feature>
<feature type="active site" description="For PL1-PRO activity" evidence="6">
    <location>
        <position position="1236"/>
    </location>
</feature>
<feature type="active site" description="For PL2-PRO activity" evidence="6">
    <location>
        <position position="1671"/>
    </location>
</feature>
<feature type="active site" description="For PL2-PRO activity" evidence="6">
    <location>
        <position position="1828"/>
    </location>
</feature>
<feature type="active site" description="For PL2-PRO activity" evidence="6">
    <location>
        <position position="1842"/>
    </location>
</feature>
<feature type="active site" description="For 3CL-PRO activity" evidence="9">
    <location>
        <position position="3287"/>
    </location>
</feature>
<feature type="active site" description="For 3CL-PRO activity" evidence="9">
    <location>
        <position position="3391"/>
    </location>
</feature>
<feature type="active site" evidence="15">
    <location>
        <position position="5124"/>
    </location>
</feature>
<feature type="active site" evidence="15">
    <location>
        <position position="5125"/>
    </location>
</feature>
<feature type="active site" evidence="15">
    <location>
        <position position="5126"/>
    </location>
</feature>
<feature type="active site" evidence="20">
    <location>
        <position position="5989"/>
    </location>
</feature>
<feature type="active site" evidence="20">
    <location>
        <position position="5991"/>
    </location>
</feature>
<feature type="active site" evidence="20">
    <location>
        <position position="6090"/>
    </location>
</feature>
<feature type="active site" evidence="20">
    <location>
        <position position="6167"/>
    </location>
</feature>
<feature type="active site" evidence="20">
    <location>
        <position position="6172"/>
    </location>
</feature>
<feature type="active site" evidence="23">
    <location>
        <position position="6683"/>
    </location>
</feature>
<feature type="active site" evidence="23">
    <location>
        <position position="6698"/>
    </location>
</feature>
<feature type="active site" evidence="23">
    <location>
        <position position="6738"/>
    </location>
</feature>
<feature type="active site" evidence="22">
    <location>
        <position position="6841"/>
    </location>
</feature>
<feature type="active site" evidence="22">
    <location>
        <position position="6925"/>
    </location>
</feature>
<feature type="active site" evidence="22">
    <location>
        <position position="6965"/>
    </location>
</feature>
<feature type="active site" evidence="22">
    <location>
        <position position="6998"/>
    </location>
</feature>
<feature type="binding site" evidence="28">
    <location>
        <position position="392"/>
    </location>
    <ligand>
        <name>Zn(2+)</name>
        <dbReference type="ChEBI" id="CHEBI:29105"/>
        <label>1</label>
    </ligand>
</feature>
<feature type="binding site" evidence="28">
    <location>
        <position position="397"/>
    </location>
    <ligand>
        <name>Zn(2+)</name>
        <dbReference type="ChEBI" id="CHEBI:29105"/>
        <label>1</label>
    </ligand>
</feature>
<feature type="binding site" evidence="28">
    <location>
        <position position="413"/>
    </location>
    <ligand>
        <name>Zn(2+)</name>
        <dbReference type="ChEBI" id="CHEBI:29105"/>
        <label>1</label>
    </ligand>
</feature>
<feature type="binding site" evidence="28">
    <location>
        <position position="416"/>
    </location>
    <ligand>
        <name>Zn(2+)</name>
        <dbReference type="ChEBI" id="CHEBI:29105"/>
        <label>1</label>
    </ligand>
</feature>
<feature type="binding site" evidence="6">
    <location>
        <position position="1151"/>
    </location>
    <ligand>
        <name>Zn(2+)</name>
        <dbReference type="ChEBI" id="CHEBI:29105"/>
        <label>2</label>
    </ligand>
</feature>
<feature type="binding site" evidence="6">
    <location>
        <position position="1154"/>
    </location>
    <ligand>
        <name>Zn(2+)</name>
        <dbReference type="ChEBI" id="CHEBI:29105"/>
        <label>2</label>
    </ligand>
</feature>
<feature type="binding site" evidence="6">
    <location>
        <position position="1177"/>
    </location>
    <ligand>
        <name>Zn(2+)</name>
        <dbReference type="ChEBI" id="CHEBI:29105"/>
        <label>2</label>
    </ligand>
</feature>
<feature type="binding site" evidence="6">
    <location>
        <position position="1179"/>
    </location>
    <ligand>
        <name>Zn(2+)</name>
        <dbReference type="ChEBI" id="CHEBI:29105"/>
        <label>2</label>
    </ligand>
</feature>
<feature type="binding site" evidence="6">
    <location>
        <position position="1749"/>
    </location>
    <ligand>
        <name>Zn(2+)</name>
        <dbReference type="ChEBI" id="CHEBI:29105"/>
        <label>3</label>
    </ligand>
</feature>
<feature type="binding site" evidence="6">
    <location>
        <position position="1751"/>
    </location>
    <ligand>
        <name>Zn(2+)</name>
        <dbReference type="ChEBI" id="CHEBI:29105"/>
        <label>3</label>
    </ligand>
</feature>
<feature type="binding site" evidence="6">
    <location>
        <position position="1783"/>
    </location>
    <ligand>
        <name>Zn(2+)</name>
        <dbReference type="ChEBI" id="CHEBI:29105"/>
        <label>3</label>
    </ligand>
</feature>
<feature type="binding site" evidence="6">
    <location>
        <position position="1785"/>
    </location>
    <ligand>
        <name>Zn(2+)</name>
        <dbReference type="ChEBI" id="CHEBI:29105"/>
        <label>3</label>
    </ligand>
</feature>
<feature type="binding site" evidence="31">
    <location>
        <position position="2387"/>
    </location>
    <ligand>
        <name>Zn(2+)</name>
        <dbReference type="ChEBI" id="CHEBI:29105"/>
        <label>4</label>
    </ligand>
</feature>
<feature type="binding site" evidence="31">
    <location>
        <position position="2392"/>
    </location>
    <ligand>
        <name>Zn(2+)</name>
        <dbReference type="ChEBI" id="CHEBI:29105"/>
        <label>4</label>
    </ligand>
</feature>
<feature type="binding site" evidence="31">
    <location>
        <position position="2397"/>
    </location>
    <ligand>
        <name>Zn(2+)</name>
        <dbReference type="ChEBI" id="CHEBI:29105"/>
        <label>4</label>
    </ligand>
</feature>
<feature type="binding site" evidence="31">
    <location>
        <position position="2400"/>
    </location>
    <ligand>
        <name>Zn(2+)</name>
        <dbReference type="ChEBI" id="CHEBI:29105"/>
        <label>4</label>
    </ligand>
</feature>
<feature type="binding site" evidence="31">
    <location>
        <position position="2433"/>
    </location>
    <ligand>
        <name>Zn(2+)</name>
        <dbReference type="ChEBI" id="CHEBI:29105"/>
        <label>5</label>
    </ligand>
</feature>
<feature type="binding site" evidence="31">
    <location>
        <position position="2436"/>
    </location>
    <ligand>
        <name>Zn(2+)</name>
        <dbReference type="ChEBI" id="CHEBI:29105"/>
        <label>5</label>
    </ligand>
</feature>
<feature type="binding site" evidence="31">
    <location>
        <position position="2440"/>
    </location>
    <ligand>
        <name>Zn(2+)</name>
        <dbReference type="ChEBI" id="CHEBI:29105"/>
        <label>5</label>
    </ligand>
</feature>
<feature type="binding site" evidence="31">
    <location>
        <position position="2443"/>
    </location>
    <ligand>
        <name>Zn(2+)</name>
        <dbReference type="ChEBI" id="CHEBI:29105"/>
        <label>5</label>
    </ligand>
</feature>
<feature type="binding site" evidence="19">
    <location>
        <position position="4306"/>
    </location>
    <ligand>
        <name>Zn(2+)</name>
        <dbReference type="ChEBI" id="CHEBI:29105"/>
        <label>6</label>
    </ligand>
</feature>
<feature type="binding site" evidence="19">
    <location>
        <position position="4309"/>
    </location>
    <ligand>
        <name>Zn(2+)</name>
        <dbReference type="ChEBI" id="CHEBI:29105"/>
        <label>6</label>
    </ligand>
</feature>
<feature type="binding site" evidence="19">
    <location>
        <position position="4315"/>
    </location>
    <ligand>
        <name>Zn(2+)</name>
        <dbReference type="ChEBI" id="CHEBI:29105"/>
        <label>6</label>
    </ligand>
</feature>
<feature type="binding site" evidence="19">
    <location>
        <position position="4322"/>
    </location>
    <ligand>
        <name>Zn(2+)</name>
        <dbReference type="ChEBI" id="CHEBI:29105"/>
        <label>6</label>
    </ligand>
</feature>
<feature type="binding site" evidence="19">
    <location>
        <position position="4348"/>
    </location>
    <ligand>
        <name>Zn(2+)</name>
        <dbReference type="ChEBI" id="CHEBI:29105"/>
        <label>7</label>
    </ligand>
</feature>
<feature type="binding site" evidence="19">
    <location>
        <position position="4351"/>
    </location>
    <ligand>
        <name>Zn(2+)</name>
        <dbReference type="ChEBI" id="CHEBI:29105"/>
        <label>7</label>
    </ligand>
</feature>
<feature type="binding site" evidence="19">
    <location>
        <position position="4359"/>
    </location>
    <ligand>
        <name>Zn(2+)</name>
        <dbReference type="ChEBI" id="CHEBI:29105"/>
        <label>7</label>
    </ligand>
</feature>
<feature type="binding site" evidence="19">
    <location>
        <position position="4361"/>
    </location>
    <ligand>
        <name>Zn(2+)</name>
        <dbReference type="ChEBI" id="CHEBI:29105"/>
        <label>7</label>
    </ligand>
</feature>
<feature type="binding site" evidence="3">
    <location>
        <position position="4578"/>
    </location>
    <ligand>
        <name>Mn(2+)</name>
        <dbReference type="ChEBI" id="CHEBI:29035"/>
    </ligand>
</feature>
<feature type="binding site" evidence="3">
    <location>
        <position position="4587"/>
    </location>
    <ligand>
        <name>Mn(2+)</name>
        <dbReference type="ChEBI" id="CHEBI:29035"/>
    </ligand>
</feature>
<feature type="binding site" evidence="34">
    <location>
        <position position="4660"/>
    </location>
    <ligand>
        <name>Zn(2+)</name>
        <dbReference type="ChEBI" id="CHEBI:29105"/>
        <label>8</label>
    </ligand>
</feature>
<feature type="binding site" evidence="34">
    <location>
        <position position="4666"/>
    </location>
    <ligand>
        <name>Zn(2+)</name>
        <dbReference type="ChEBI" id="CHEBI:29105"/>
        <label>8</label>
    </ligand>
</feature>
<feature type="binding site" evidence="34">
    <location>
        <position position="4671"/>
    </location>
    <ligand>
        <name>Zn(2+)</name>
        <dbReference type="ChEBI" id="CHEBI:29105"/>
        <label>8</label>
    </ligand>
</feature>
<feature type="binding site" evidence="34">
    <location>
        <position position="4675"/>
    </location>
    <ligand>
        <name>Zn(2+)</name>
        <dbReference type="ChEBI" id="CHEBI:29105"/>
        <label>8</label>
    </ligand>
</feature>
<feature type="binding site" evidence="15">
    <location>
        <position position="4852"/>
    </location>
    <ligand>
        <name>Zn(2+)</name>
        <dbReference type="ChEBI" id="CHEBI:29105"/>
        <label>9</label>
    </ligand>
</feature>
<feature type="binding site" evidence="15">
    <location>
        <position position="5007"/>
    </location>
    <ligand>
        <name>Zn(2+)</name>
        <dbReference type="ChEBI" id="CHEBI:29105"/>
        <label>9</label>
    </ligand>
</feature>
<feature type="binding site" evidence="15">
    <location>
        <position position="5010"/>
    </location>
    <ligand>
        <name>Zn(2+)</name>
        <dbReference type="ChEBI" id="CHEBI:29105"/>
        <label>9</label>
    </ligand>
</feature>
<feature type="binding site" evidence="15">
    <location>
        <position position="5011"/>
    </location>
    <ligand>
        <name>Zn(2+)</name>
        <dbReference type="ChEBI" id="CHEBI:29105"/>
        <label>9</label>
    </ligand>
</feature>
<feature type="binding site" evidence="10">
    <location>
        <position position="5302"/>
    </location>
    <ligand>
        <name>Zn(2+)</name>
        <dbReference type="ChEBI" id="CHEBI:29105"/>
        <label>10</label>
    </ligand>
</feature>
<feature type="binding site" evidence="10">
    <location>
        <position position="5305"/>
    </location>
    <ligand>
        <name>Zn(2+)</name>
        <dbReference type="ChEBI" id="CHEBI:29105"/>
        <label>10</label>
    </ligand>
</feature>
<feature type="binding site" evidence="10">
    <location>
        <position position="5313"/>
    </location>
    <ligand>
        <name>Zn(2+)</name>
        <dbReference type="ChEBI" id="CHEBI:29105"/>
        <label>11</label>
    </ligand>
</feature>
<feature type="binding site" evidence="10">
    <location>
        <position position="5316"/>
    </location>
    <ligand>
        <name>Zn(2+)</name>
        <dbReference type="ChEBI" id="CHEBI:29105"/>
        <label>11</label>
    </ligand>
</feature>
<feature type="binding site" evidence="10">
    <location>
        <position position="5323"/>
    </location>
    <ligand>
        <name>Zn(2+)</name>
        <dbReference type="ChEBI" id="CHEBI:29105"/>
        <label>10</label>
    </ligand>
</feature>
<feature type="binding site" evidence="10">
    <location>
        <position position="5326"/>
    </location>
    <ligand>
        <name>Zn(2+)</name>
        <dbReference type="ChEBI" id="CHEBI:29105"/>
        <label>10</label>
    </ligand>
</feature>
<feature type="binding site" evidence="10">
    <location>
        <position position="5330"/>
    </location>
    <ligand>
        <name>Zn(2+)</name>
        <dbReference type="ChEBI" id="CHEBI:29105"/>
        <label>11</label>
    </ligand>
</feature>
<feature type="binding site" evidence="10">
    <location>
        <position position="5336"/>
    </location>
    <ligand>
        <name>Zn(2+)</name>
        <dbReference type="ChEBI" id="CHEBI:29105"/>
        <label>11</label>
    </ligand>
</feature>
<feature type="binding site" evidence="10">
    <location>
        <position position="5347"/>
    </location>
    <ligand>
        <name>Zn(2+)</name>
        <dbReference type="ChEBI" id="CHEBI:29105"/>
        <label>12</label>
    </ligand>
</feature>
<feature type="binding site" evidence="10">
    <location>
        <position position="5352"/>
    </location>
    <ligand>
        <name>Zn(2+)</name>
        <dbReference type="ChEBI" id="CHEBI:29105"/>
        <label>12</label>
    </ligand>
</feature>
<feature type="binding site" evidence="10">
    <location>
        <position position="5369"/>
    </location>
    <ligand>
        <name>Zn(2+)</name>
        <dbReference type="ChEBI" id="CHEBI:29105"/>
        <label>12</label>
    </ligand>
</feature>
<feature type="binding site" evidence="10">
    <location>
        <position position="5372"/>
    </location>
    <ligand>
        <name>Zn(2+)</name>
        <dbReference type="ChEBI" id="CHEBI:29105"/>
        <label>12</label>
    </ligand>
</feature>
<feature type="binding site" evidence="1">
    <location>
        <begin position="5578"/>
        <end position="5585"/>
    </location>
    <ligand>
        <name>ATP</name>
        <dbReference type="ChEBI" id="CHEBI:30616"/>
    </ligand>
</feature>
<feature type="binding site" evidence="20">
    <location>
        <position position="6106"/>
    </location>
    <ligand>
        <name>Zn(2+)</name>
        <dbReference type="ChEBI" id="CHEBI:29105"/>
        <label>13</label>
    </ligand>
</feature>
<feature type="binding site" evidence="20">
    <location>
        <position position="6109"/>
    </location>
    <ligand>
        <name>Zn(2+)</name>
        <dbReference type="ChEBI" id="CHEBI:29105"/>
        <label>13</label>
    </ligand>
</feature>
<feature type="binding site" evidence="20">
    <location>
        <position position="6125"/>
    </location>
    <ligand>
        <name>Zn(2+)</name>
        <dbReference type="ChEBI" id="CHEBI:29105"/>
        <label>13</label>
    </ligand>
</feature>
<feature type="binding site" evidence="20">
    <location>
        <position position="6128"/>
    </location>
    <ligand>
        <name>Zn(2+)</name>
        <dbReference type="ChEBI" id="CHEBI:29105"/>
        <label>13</label>
    </ligand>
</feature>
<feature type="binding site" evidence="20">
    <location>
        <position position="6156"/>
    </location>
    <ligand>
        <name>Zn(2+)</name>
        <dbReference type="ChEBI" id="CHEBI:29105"/>
        <label>14</label>
    </ligand>
</feature>
<feature type="binding site" evidence="20">
    <location>
        <position position="6160"/>
    </location>
    <ligand>
        <name>Zn(2+)</name>
        <dbReference type="ChEBI" id="CHEBI:29105"/>
        <label>14</label>
    </ligand>
</feature>
<feature type="binding site" evidence="20">
    <location>
        <position position="6163"/>
    </location>
    <ligand>
        <name>Zn(2+)</name>
        <dbReference type="ChEBI" id="CHEBI:29105"/>
        <label>14</label>
    </ligand>
</feature>
<feature type="binding site" evidence="20">
    <location>
        <position position="6178"/>
    </location>
    <ligand>
        <name>Zn(2+)</name>
        <dbReference type="ChEBI" id="CHEBI:29105"/>
        <label>14</label>
    </ligand>
</feature>
<feature type="binding site" evidence="21">
    <location>
        <begin position="6230"/>
        <end position="6236"/>
    </location>
    <ligand>
        <name>S-adenosyl-L-methionine</name>
        <dbReference type="ChEBI" id="CHEBI:59789"/>
    </ligand>
</feature>
<feature type="binding site" evidence="21">
    <location>
        <position position="6346"/>
    </location>
    <ligand>
        <name>Zn(2+)</name>
        <dbReference type="ChEBI" id="CHEBI:29105"/>
        <label>15</label>
    </ligand>
</feature>
<feature type="binding site" evidence="21">
    <location>
        <position position="6367"/>
    </location>
    <ligand>
        <name>Zn(2+)</name>
        <dbReference type="ChEBI" id="CHEBI:29105"/>
        <label>15</label>
    </ligand>
</feature>
<feature type="binding site" evidence="21">
    <location>
        <position position="6378"/>
    </location>
    <ligand>
        <name>Zn(2+)</name>
        <dbReference type="ChEBI" id="CHEBI:29105"/>
        <label>15</label>
    </ligand>
</feature>
<feature type="binding site" evidence="21">
    <location>
        <position position="6381"/>
    </location>
    <ligand>
        <name>Zn(2+)</name>
        <dbReference type="ChEBI" id="CHEBI:29105"/>
        <label>15</label>
    </ligand>
</feature>
<feature type="site" description="Cleavage; by PL1-PRO" evidence="1">
    <location>
        <begin position="246"/>
        <end position="247"/>
    </location>
</feature>
<feature type="site" description="Cleavage; by PL1-PRO" evidence="1">
    <location>
        <begin position="851"/>
        <end position="852"/>
    </location>
</feature>
<feature type="site" description="Cleavage; by PL2-PRO" evidence="1">
    <location>
        <begin position="2750"/>
        <end position="2751"/>
    </location>
</feature>
<feature type="site" description="Cleavage; by 3CL-PRO" evidence="1">
    <location>
        <begin position="3246"/>
        <end position="3247"/>
    </location>
</feature>
<feature type="site" description="Cleavage; by 3CL-PRO" evidence="1">
    <location>
        <begin position="3549"/>
        <end position="3550"/>
    </location>
</feature>
<feature type="site" description="Cleavage; by 3CL-PRO" evidence="1">
    <location>
        <begin position="3836"/>
        <end position="3837"/>
    </location>
</feature>
<feature type="site" description="Cleavage; by 3CL-PRO" evidence="1">
    <location>
        <begin position="3925"/>
        <end position="3926"/>
    </location>
</feature>
<feature type="site" description="Cleavage; by 3CL-PRO" evidence="1">
    <location>
        <begin position="4122"/>
        <end position="4123"/>
    </location>
</feature>
<feature type="site" description="Cleavage; by 3CL-PRO" evidence="1">
    <location>
        <begin position="4232"/>
        <end position="4233"/>
    </location>
</feature>
<feature type="site" description="Cleavage; by 3CL-PRO" evidence="1">
    <location>
        <begin position="4369"/>
        <end position="4370"/>
    </location>
</feature>
<feature type="site" description="Cleavage; by 3CL-PRO" evidence="1">
    <location>
        <begin position="5297"/>
        <end position="5298"/>
    </location>
</feature>
<feature type="site" description="Cleavage; by 3CL-PRO" evidence="1">
    <location>
        <begin position="5900"/>
        <end position="5901"/>
    </location>
</feature>
<feature type="site" description="Cleavage; by 3CL-PRO" evidence="1">
    <location>
        <begin position="6421"/>
        <end position="6422"/>
    </location>
</feature>
<feature type="site" description="Cleavage; by 3CL-PRO" evidence="1">
    <location>
        <begin position="6795"/>
        <end position="6796"/>
    </location>
</feature>
<feature type="disulfide bond" evidence="32">
    <location>
        <begin position="2251"/>
        <end position="2275"/>
    </location>
</feature>
<feature type="disulfide bond" evidence="32">
    <location>
        <begin position="2266"/>
        <end position="2272"/>
    </location>
</feature>
<protein>
    <recommendedName>
        <fullName>Replicase polyprotein 1ab</fullName>
        <shortName>pp1ab</shortName>
    </recommendedName>
    <alternativeName>
        <fullName>ORF1ab polyprotein</fullName>
    </alternativeName>
    <component>
        <recommendedName>
            <fullName>Host translation inhibitor nsp1</fullName>
            <shortName>nsp1</shortName>
        </recommendedName>
        <alternativeName>
            <fullName>p28</fullName>
        </alternativeName>
    </component>
    <component>
        <recommendedName>
            <fullName>Non-structural protein 2</fullName>
            <shortName>nsp2</shortName>
        </recommendedName>
        <alternativeName>
            <fullName>p65</fullName>
        </alternativeName>
    </component>
    <component>
        <recommendedName>
            <fullName>Papain-like proteinase nsp3</fullName>
            <shortName>PL-PRO</shortName>
            <ecNumber>3.4.19.12</ecNumber>
            <ecNumber>3.4.22.-</ecNumber>
        </recommendedName>
        <alternativeName>
            <fullName>Non-structural protein 3</fullName>
            <shortName>nsp3</shortName>
        </alternativeName>
        <alternativeName>
            <fullName>p210</fullName>
        </alternativeName>
    </component>
    <component>
        <recommendedName>
            <fullName>Non-structural protein 4</fullName>
            <shortName>nsp4</shortName>
        </recommendedName>
        <alternativeName>
            <fullName>Peptide HD2</fullName>
        </alternativeName>
        <alternativeName>
            <fullName>p44</fullName>
        </alternativeName>
    </component>
    <component>
        <recommendedName>
            <fullName>3C-like proteinase nsp5</fullName>
            <shortName>3CL-PRO</shortName>
            <shortName>3CLp</shortName>
            <ecNumber>3.4.22.-</ecNumber>
        </recommendedName>
        <alternativeName>
            <fullName>M-PRO</fullName>
        </alternativeName>
        <alternativeName>
            <fullName>nsp5</fullName>
        </alternativeName>
        <alternativeName>
            <fullName>p27</fullName>
        </alternativeName>
    </component>
    <component>
        <recommendedName>
            <fullName>Non-structural protein 6</fullName>
            <shortName>nsp6</shortName>
        </recommendedName>
    </component>
    <component>
        <recommendedName>
            <fullName>Non-structural protein 7</fullName>
            <shortName>nsp7</shortName>
        </recommendedName>
        <alternativeName>
            <fullName>p10</fullName>
        </alternativeName>
    </component>
    <component>
        <recommendedName>
            <fullName>Non-structural protein 8</fullName>
            <shortName>nsp8</shortName>
        </recommendedName>
        <alternativeName>
            <fullName>p22</fullName>
        </alternativeName>
    </component>
    <component>
        <recommendedName>
            <fullName>Viral protein genome-linked nsp9</fullName>
        </recommendedName>
        <alternativeName>
            <fullName>Non-structural protein 9</fullName>
            <shortName>nsp9</shortName>
        </alternativeName>
        <alternativeName>
            <fullName>RNA-capping enzyme subunit nsp9</fullName>
        </alternativeName>
        <alternativeName>
            <fullName>p12</fullName>
        </alternativeName>
    </component>
    <component>
        <recommendedName>
            <fullName>Non-structural protein 10</fullName>
            <shortName>nsp10</shortName>
        </recommendedName>
        <alternativeName>
            <fullName>Growth factor-like peptide</fullName>
            <shortName>GFL</shortName>
        </alternativeName>
        <alternativeName>
            <fullName>p15</fullName>
        </alternativeName>
    </component>
    <component>
        <recommendedName>
            <fullName>RNA-directed RNA polymerase nsp12</fullName>
            <shortName>Pol</shortName>
            <shortName>RdRp</shortName>
            <ecNumber>2.7.7.48</ecNumber>
            <ecNumber>2.7.7.50</ecNumber>
        </recommendedName>
        <alternativeName>
            <fullName>nsp12</fullName>
        </alternativeName>
        <alternativeName>
            <fullName>p100</fullName>
        </alternativeName>
    </component>
    <component>
        <recommendedName>
            <fullName>Helicase nsp13</fullName>
            <shortName>Hel</shortName>
            <ecNumber>3.6.4.12</ecNumber>
            <ecNumber>3.6.4.13</ecNumber>
        </recommendedName>
        <alternativeName>
            <fullName>nsp13</fullName>
        </alternativeName>
        <alternativeName>
            <fullName>p67</fullName>
        </alternativeName>
    </component>
    <component>
        <recommendedName>
            <fullName>Guanine-N7 methyltransferase nsp14</fullName>
            <shortName>ExoN</shortName>
            <ecNumber>2.1.1.56</ecNumber>
            <ecNumber>3.1.13.-</ecNumber>
        </recommendedName>
        <alternativeName>
            <fullName>nsp14</fullName>
        </alternativeName>
    </component>
    <component>
        <recommendedName>
            <fullName>Uridylate-specific endoribonuclease nsp15</fullName>
            <ecNumber>4.6.1.-</ecNumber>
        </recommendedName>
        <alternativeName>
            <fullName>NendoU</fullName>
        </alternativeName>
        <alternativeName>
            <fullName>nsp15</fullName>
        </alternativeName>
        <alternativeName>
            <fullName>p35</fullName>
        </alternativeName>
    </component>
    <component>
        <recommendedName>
            <fullName>2'-O-methyltransferase</fullName>
            <ecNumber>2.1.1.57</ecNumber>
        </recommendedName>
        <alternativeName>
            <fullName>nsp16</fullName>
        </alternativeName>
    </component>
</protein>
<accession>P0C6W7</accession>
<accession>Q91A28</accession>
<accession>Q91A29</accession>
<keyword id="KW-1072">Activation of host autophagy by virus</keyword>
<keyword id="KW-0067">ATP-binding</keyword>
<keyword id="KW-1132">Decay of host mRNAs by virus</keyword>
<keyword id="KW-1015">Disulfide bond</keyword>
<keyword id="KW-0255">Endonuclease</keyword>
<keyword id="KW-1262">Eukaryotic host gene expression shutoff by virus</keyword>
<keyword id="KW-1193">Eukaryotic host translation shutoff by virus</keyword>
<keyword id="KW-0269">Exonuclease</keyword>
<keyword id="KW-0347">Helicase</keyword>
<keyword id="KW-1035">Host cytoplasm</keyword>
<keyword id="KW-1190">Host gene expression shutoff by virus</keyword>
<keyword id="KW-1043">Host membrane</keyword>
<keyword id="KW-1192">Host mRNA suppression by virus</keyword>
<keyword id="KW-0945">Host-virus interaction</keyword>
<keyword id="KW-0378">Hydrolase</keyword>
<keyword id="KW-1090">Inhibition of host innate immune response by virus</keyword>
<keyword id="KW-1114">Inhibition of host interferon signaling pathway by virus</keyword>
<keyword id="KW-1095">Inhibition of host ISG15 by virus</keyword>
<keyword id="KW-1100">Inhibition of host NF-kappa-B by virus</keyword>
<keyword id="KW-0922">Interferon antiviral system evasion</keyword>
<keyword id="KW-0456">Lyase</keyword>
<keyword id="KW-0464">Manganese</keyword>
<keyword id="KW-0472">Membrane</keyword>
<keyword id="KW-0479">Metal-binding</keyword>
<keyword id="KW-0489">Methyltransferase</keyword>
<keyword id="KW-1127">Modulation of host ubiquitin pathway by viral deubiquitinase</keyword>
<keyword id="KW-1130">Modulation of host ubiquitin pathway by virus</keyword>
<keyword id="KW-0540">Nuclease</keyword>
<keyword id="KW-0547">Nucleotide-binding</keyword>
<keyword id="KW-0548">Nucleotidyltransferase</keyword>
<keyword id="KW-0645">Protease</keyword>
<keyword id="KW-0677">Repeat</keyword>
<keyword id="KW-0688">Ribosomal frameshifting</keyword>
<keyword id="KW-0694">RNA-binding</keyword>
<keyword id="KW-0696">RNA-directed RNA polymerase</keyword>
<keyword id="KW-0788">Thiol protease</keyword>
<keyword id="KW-0808">Transferase</keyword>
<keyword id="KW-0812">Transmembrane</keyword>
<keyword id="KW-1133">Transmembrane helix</keyword>
<keyword id="KW-0833">Ubl conjugation pathway</keyword>
<keyword id="KW-0899">Viral immunoevasion</keyword>
<keyword id="KW-0693">Viral RNA replication</keyword>
<keyword id="KW-0862">Zinc</keyword>
<keyword id="KW-0863">Zinc-finger</keyword>
<gene>
    <name type="primary">rep</name>
    <name type="ORF">1a-1b</name>
</gene>
<organismHost>
    <name type="scientific">Bos taurus</name>
    <name type="common">Bovine</name>
    <dbReference type="NCBI Taxonomy" id="9913"/>
</organismHost>
<proteinExistence type="inferred from homology"/>
<evidence type="ECO:0000250" key="1"/>
<evidence type="ECO:0000250" key="2">
    <source>
        <dbReference type="UniProtKB" id="P0C6X7"/>
    </source>
</evidence>
<evidence type="ECO:0000250" key="3">
    <source>
        <dbReference type="UniProtKB" id="P0DTD1"/>
    </source>
</evidence>
<evidence type="ECO:0000255" key="4"/>
<evidence type="ECO:0000255" key="5">
    <source>
        <dbReference type="PROSITE-ProRule" id="PRU00214"/>
    </source>
</evidence>
<evidence type="ECO:0000255" key="6">
    <source>
        <dbReference type="PROSITE-ProRule" id="PRU00444"/>
    </source>
</evidence>
<evidence type="ECO:0000255" key="7">
    <source>
        <dbReference type="PROSITE-ProRule" id="PRU00490"/>
    </source>
</evidence>
<evidence type="ECO:0000255" key="8">
    <source>
        <dbReference type="PROSITE-ProRule" id="PRU00539"/>
    </source>
</evidence>
<evidence type="ECO:0000255" key="9">
    <source>
        <dbReference type="PROSITE-ProRule" id="PRU00772"/>
    </source>
</evidence>
<evidence type="ECO:0000255" key="10">
    <source>
        <dbReference type="PROSITE-ProRule" id="PRU00986"/>
    </source>
</evidence>
<evidence type="ECO:0000255" key="11">
    <source>
        <dbReference type="PROSITE-ProRule" id="PRU01289"/>
    </source>
</evidence>
<evidence type="ECO:0000255" key="12">
    <source>
        <dbReference type="PROSITE-ProRule" id="PRU01290"/>
    </source>
</evidence>
<evidence type="ECO:0000255" key="13">
    <source>
        <dbReference type="PROSITE-ProRule" id="PRU01291"/>
    </source>
</evidence>
<evidence type="ECO:0000255" key="14">
    <source>
        <dbReference type="PROSITE-ProRule" id="PRU01292"/>
    </source>
</evidence>
<evidence type="ECO:0000255" key="15">
    <source>
        <dbReference type="PROSITE-ProRule" id="PRU01293"/>
    </source>
</evidence>
<evidence type="ECO:0000255" key="16">
    <source>
        <dbReference type="PROSITE-ProRule" id="PRU01294"/>
    </source>
</evidence>
<evidence type="ECO:0000255" key="17">
    <source>
        <dbReference type="PROSITE-ProRule" id="PRU01295"/>
    </source>
</evidence>
<evidence type="ECO:0000255" key="18">
    <source>
        <dbReference type="PROSITE-ProRule" id="PRU01296"/>
    </source>
</evidence>
<evidence type="ECO:0000255" key="19">
    <source>
        <dbReference type="PROSITE-ProRule" id="PRU01297"/>
    </source>
</evidence>
<evidence type="ECO:0000255" key="20">
    <source>
        <dbReference type="PROSITE-ProRule" id="PRU01298"/>
    </source>
</evidence>
<evidence type="ECO:0000255" key="21">
    <source>
        <dbReference type="PROSITE-ProRule" id="PRU01299"/>
    </source>
</evidence>
<evidence type="ECO:0000255" key="22">
    <source>
        <dbReference type="PROSITE-ProRule" id="PRU01300"/>
    </source>
</evidence>
<evidence type="ECO:0000255" key="23">
    <source>
        <dbReference type="PROSITE-ProRule" id="PRU01303"/>
    </source>
</evidence>
<evidence type="ECO:0000255" key="24">
    <source>
        <dbReference type="PROSITE-ProRule" id="PRU01305"/>
    </source>
</evidence>
<evidence type="ECO:0000255" key="25">
    <source>
        <dbReference type="PROSITE-ProRule" id="PRU01306"/>
    </source>
</evidence>
<evidence type="ECO:0000255" key="26">
    <source>
        <dbReference type="PROSITE-ProRule" id="PRU01307"/>
    </source>
</evidence>
<evidence type="ECO:0000255" key="27">
    <source>
        <dbReference type="PROSITE-ProRule" id="PRU01308"/>
    </source>
</evidence>
<evidence type="ECO:0000255" key="28">
    <source>
        <dbReference type="PROSITE-ProRule" id="PRU01333"/>
    </source>
</evidence>
<evidence type="ECO:0000255" key="29">
    <source>
        <dbReference type="PROSITE-ProRule" id="PRU01334"/>
    </source>
</evidence>
<evidence type="ECO:0000255" key="30">
    <source>
        <dbReference type="PROSITE-ProRule" id="PRU01335"/>
    </source>
</evidence>
<evidence type="ECO:0000255" key="31">
    <source>
        <dbReference type="PROSITE-ProRule" id="PRU01336"/>
    </source>
</evidence>
<evidence type="ECO:0000255" key="32">
    <source>
        <dbReference type="PROSITE-ProRule" id="PRU01337"/>
    </source>
</evidence>
<evidence type="ECO:0000255" key="33">
    <source>
        <dbReference type="PROSITE-ProRule" id="PRU01338"/>
    </source>
</evidence>
<evidence type="ECO:0000255" key="34">
    <source>
        <dbReference type="PROSITE-ProRule" id="PRU01344"/>
    </source>
</evidence>
<evidence type="ECO:0000305" key="35"/>
<name>R1AB_CVBEN</name>
<comment type="function">
    <text evidence="2">The replicase polyprotein of coronaviruses is a multifunctional protein: it contains the activities necessary for the transcription of negative stranded RNA, leader RNA, subgenomic mRNAs and progeny virion RNA as well as proteinases responsible for the cleavage of the polyprotein into functional products.</text>
</comment>
<comment type="function">
    <molecule>Host translation inhibitor nsp1</molecule>
    <text evidence="2">Inhibits host translation by interacting with the 40S ribosomal subunit. The nsp1-40S ribosome complex further induces an endonucleolytic cleavage near the 5'UTR of host mRNAs, targeting them for degradation. Viral mRNAs are not susceptible to nsp1-mediated endonucleolytic RNA cleavage thanks to the presence of a 5'-end leader sequence and are therefore protected from degradation. By suppressing host gene expression, nsp1 facilitates efficient viral gene expression in infected cells and evasion from host immune response.</text>
</comment>
<comment type="function">
    <molecule>Non-structural protein 2</molecule>
    <text evidence="2">May play a role in the modulation of host cell survival signaling pathway by interacting with host PHB and PHB2. Indeed, these two proteins play a role in maintaining the functional integrity of the mitochondria and protecting cells from various stresses.</text>
</comment>
<comment type="function">
    <molecule>Papain-like proteinase nsp3</molecule>
    <text evidence="2">Responsible for the cleavages located at the N-terminus of the replicase polyprotein. In addition, PL-PRO possesses a deubiquitinating/deISGylating activity and processes both 'Lys-48'- and 'Lys-63'-linked polyubiquitin chains from cellular substrates. Participates together with nsp4 in the assembly of virally-induced cytoplasmic double-membrane vesicles necessary for viral replication. Antagonizes innate immune induction of type I interferon by blocking the phosphorylation, dimerization and subsequent nuclear translocation of host IRF3. Also prevents host NF-kappa-B signaling.</text>
</comment>
<comment type="function">
    <molecule>Non-structural protein 4</molecule>
    <text evidence="2">Participates in the assembly of virally-induced cytoplasmic double-membrane vesicles necessary for viral replication.</text>
</comment>
<comment type="function">
    <molecule>3C-like proteinase nsp5</molecule>
    <text evidence="2 9">Cleaves the C-terminus of replicase polyprotein at 11 sites. Recognizes substrates containing the core sequence [ILMVF]-Q-|-[SGACN]. Also able to bind an ADP-ribose-1''-phosphate (ADRP).</text>
</comment>
<comment type="function">
    <molecule>Non-structural protein 6</molecule>
    <text evidence="2">Plays a role in the initial induction of autophagosomes from host endoplasmic reticulum. Later, limits the expansion of these phagosomes that are no longer able to deliver viral components to lysosomes.</text>
</comment>
<comment type="function">
    <molecule>Non-structural protein 7</molecule>
    <text evidence="2">Forms a hexadecamer with nsp8 (8 subunits of each) that may participate in viral replication by acting as a primase. Alternatively, may synthesize substantially longer products than oligonucleotide primers.</text>
</comment>
<comment type="function">
    <molecule>Non-structural protein 8</molecule>
    <text evidence="2">Forms a hexadecamer with nsp7 (8 subunits of each) that may participate in viral replication by acting as a primase. Alternatively, may synthesize substantially longer products than oligonucleotide primers.</text>
</comment>
<comment type="function">
    <molecule>Viral protein genome-linked nsp9</molecule>
    <text evidence="3">Forms a primer, NSP9-pU, which is utilized by the polymerase for the initiation of RNA chains. Interacts with ribosome signal recognition particle RNA (SRP). Together with NSP8, suppress protein integration into the cell membrane, thereby disrupting host immune defenses.</text>
</comment>
<comment type="function">
    <molecule>Non-structural protein 10</molecule>
    <text evidence="2">Plays a pivotal role in viral transcription by stimulating both nsp14 3'-5' exoribonuclease and nsp16 2'-O-methyltransferase activities. Therefore plays an essential role in viral mRNAs cap methylation.</text>
</comment>
<comment type="function">
    <molecule>RNA-directed RNA polymerase nsp12</molecule>
    <text evidence="3">RNA-directed RNA polymerase that catalyzes the transcription of viral genomic and subgenomic RNAs. Acts in complex with nsp7 and nsp8 to transcribe both the minus and positive strands of genomic RNA. The kinase-like NiRAN domain of NSP12 attaches one or more nucleotides to the amino terminus of NSP9, forming a covalent RNA-protein intermediate that serves as transcription/replication primer. Subgenomic RNAs (sgRNAs) are formed by discontinuous transcription: The polymerase has the ability to pause at transcription-regulating sequences (TRS) and jump to the leader TRS, resulting in a major deletion. This creates a series of subgenomic RNAs that are replicated, transcribed and translated. In addition, Nsp12 is a subunit of the viral RNA capping enzyme that catalyzes the RNA guanylyltransferase reaction for genomic and sub-genomic RNAs. Subsequently, the NiRAN domain transfers RNA to GDP, and forms the core cap structure GpppA-RNA.</text>
</comment>
<comment type="function">
    <molecule>Helicase nsp13</molecule>
    <text evidence="2">Multi-functional protein with a zinc-binding domain in N-terminus displaying RNA and DNA duplex-unwinding activities with 5' to 3' polarity. Activity of helicase is dependent on magnesium.</text>
</comment>
<comment type="function">
    <molecule>Guanine-N7 methyltransferase nsp14</molecule>
    <text evidence="2">Plays a role in viral RNA synthesis through two distinct activities. The N7-guanine methyltransferase activity plays a role in the formation of the cap structure GpppA-RNA. The proofreading exoribonuclease reduces the sensitivity of the virus to RNA mutagens during replication. This activity acts on both ssRNA and dsRNA in a 3'-5' direction.</text>
</comment>
<comment type="function">
    <molecule>Uridylate-specific endoribonuclease nsp15</molecule>
    <text evidence="2">Plays a role in viral transcription/replication and prevents the simultaneous activation of host cell dsRNA sensors, such as MDA5/IFIH1, OAS, and PKR (By similarity). Acts by degrading the 5'-polyuridines generated during replication of the poly(A) region of viral genomic and subgenomic RNAs. Catalyzes a two-step reaction in which a 2'3'-cyclic phosphate (2'3'-cP) is first generated by 2'-O transesterification, which is then hydrolyzed to a 3'-phosphate (3'-P) (By similarity). If not degraded, poly(U) RNA would hybridize with poly(A) RNA tails and activate host dsRNA sensors (By similarity).</text>
</comment>
<comment type="function">
    <molecule>2'-O-methyltransferase</molecule>
    <text evidence="2">Methyltransferase that mediates mRNA cap 2'-O-ribose methylation to the 5'-cap structure of viral mRNAs. N7-methyl guanosine cap is a prerequisite for binding of nsp16. Therefore plays an essential role in viral mRNAs cap methylation which is essential to evade immune system.</text>
</comment>
<comment type="catalytic activity">
    <molecule>RNA-directed RNA polymerase nsp12</molecule>
    <reaction evidence="8">
        <text>RNA(n) + a ribonucleoside 5'-triphosphate = RNA(n+1) + diphosphate</text>
        <dbReference type="Rhea" id="RHEA:21248"/>
        <dbReference type="Rhea" id="RHEA-COMP:14527"/>
        <dbReference type="Rhea" id="RHEA-COMP:17342"/>
        <dbReference type="ChEBI" id="CHEBI:33019"/>
        <dbReference type="ChEBI" id="CHEBI:61557"/>
        <dbReference type="ChEBI" id="CHEBI:140395"/>
        <dbReference type="EC" id="2.7.7.48"/>
    </reaction>
</comment>
<comment type="catalytic activity">
    <molecule>Helicase nsp13</molecule>
    <reaction>
        <text>ATP + H2O = ADP + phosphate + H(+)</text>
        <dbReference type="Rhea" id="RHEA:13065"/>
        <dbReference type="ChEBI" id="CHEBI:15377"/>
        <dbReference type="ChEBI" id="CHEBI:15378"/>
        <dbReference type="ChEBI" id="CHEBI:30616"/>
        <dbReference type="ChEBI" id="CHEBI:43474"/>
        <dbReference type="ChEBI" id="CHEBI:456216"/>
        <dbReference type="EC" id="3.6.4.12"/>
    </reaction>
</comment>
<comment type="catalytic activity">
    <molecule>Helicase nsp13</molecule>
    <reaction>
        <text>ATP + H2O = ADP + phosphate + H(+)</text>
        <dbReference type="Rhea" id="RHEA:13065"/>
        <dbReference type="ChEBI" id="CHEBI:15377"/>
        <dbReference type="ChEBI" id="CHEBI:15378"/>
        <dbReference type="ChEBI" id="CHEBI:30616"/>
        <dbReference type="ChEBI" id="CHEBI:43474"/>
        <dbReference type="ChEBI" id="CHEBI:456216"/>
        <dbReference type="EC" id="3.6.4.13"/>
    </reaction>
</comment>
<comment type="catalytic activity">
    <molecule>Papain-like proteinase nsp3</molecule>
    <reaction>
        <text>Thiol-dependent hydrolysis of ester, thioester, amide, peptide and isopeptide bonds formed by the C-terminal Gly of ubiquitin (a 76-residue protein attached to proteins as an intracellular targeting signal).</text>
        <dbReference type="EC" id="3.4.19.12"/>
    </reaction>
</comment>
<comment type="catalytic activity">
    <molecule>2'-O-methyltransferase</molecule>
    <reaction evidence="2">
        <text>a 5'-end (N(7)-methyl 5'-triphosphoguanosine)-ribonucleoside in mRNA + S-adenosyl-L-methionine = a 5'-end (N(7)-methyl 5'-triphosphoguanosine)-(2'-O-methyl-ribonucleoside) in mRNA + S-adenosyl-L-homocysteine + H(+)</text>
        <dbReference type="Rhea" id="RHEA:67020"/>
        <dbReference type="Rhea" id="RHEA-COMP:17167"/>
        <dbReference type="Rhea" id="RHEA-COMP:17168"/>
        <dbReference type="ChEBI" id="CHEBI:15378"/>
        <dbReference type="ChEBI" id="CHEBI:57856"/>
        <dbReference type="ChEBI" id="CHEBI:59789"/>
        <dbReference type="ChEBI" id="CHEBI:156461"/>
        <dbReference type="ChEBI" id="CHEBI:167609"/>
        <dbReference type="EC" id="2.1.1.57"/>
    </reaction>
</comment>
<comment type="catalytic activity">
    <molecule>Uridylate-specific endoribonuclease nsp15</molecule>
    <reaction evidence="2">
        <text>uridylyl-uridylyl-ribonucleotide-RNA = a 3'-end uridylyl-2',3'-cyclophospho-uridine-RNA + a 5'-end dephospho-ribonucleoside-RNA</text>
        <dbReference type="Rhea" id="RHEA:67732"/>
        <dbReference type="Rhea" id="RHEA-COMP:13936"/>
        <dbReference type="Rhea" id="RHEA-COMP:17334"/>
        <dbReference type="Rhea" id="RHEA-COMP:17335"/>
        <dbReference type="ChEBI" id="CHEBI:138284"/>
        <dbReference type="ChEBI" id="CHEBI:173079"/>
        <dbReference type="ChEBI" id="CHEBI:173080"/>
    </reaction>
</comment>
<comment type="catalytic activity">
    <molecule>RNA-directed RNA polymerase nsp12</molecule>
    <reaction evidence="3">
        <text>a 5'-end diphospho-ribonucleoside in mRNA + GTP + H(+) = a 5'-end (5'-triphosphoguanosine)-ribonucleoside in mRNA + diphosphate</text>
        <dbReference type="Rhea" id="RHEA:67012"/>
        <dbReference type="Rhea" id="RHEA-COMP:17165"/>
        <dbReference type="Rhea" id="RHEA-COMP:17166"/>
        <dbReference type="ChEBI" id="CHEBI:15378"/>
        <dbReference type="ChEBI" id="CHEBI:33019"/>
        <dbReference type="ChEBI" id="CHEBI:37565"/>
        <dbReference type="ChEBI" id="CHEBI:167616"/>
        <dbReference type="ChEBI" id="CHEBI:167617"/>
        <dbReference type="EC" id="2.7.7.50"/>
    </reaction>
    <physiologicalReaction direction="left-to-right" evidence="3">
        <dbReference type="Rhea" id="RHEA:67013"/>
    </physiologicalReaction>
</comment>
<comment type="catalytic activity">
    <molecule>Guanine-N7 methyltransferase nsp14</molecule>
    <reaction evidence="2">
        <text>a 5'-end (5'-triphosphoguanosine)-ribonucleoside in mRNA + S-adenosyl-L-methionine = a 5'-end (N(7)-methyl 5'-triphosphoguanosine)-ribonucleoside in mRNA + S-adenosyl-L-homocysteine</text>
        <dbReference type="Rhea" id="RHEA:67008"/>
        <dbReference type="Rhea" id="RHEA-COMP:17166"/>
        <dbReference type="Rhea" id="RHEA-COMP:17167"/>
        <dbReference type="ChEBI" id="CHEBI:57856"/>
        <dbReference type="ChEBI" id="CHEBI:59789"/>
        <dbReference type="ChEBI" id="CHEBI:156461"/>
        <dbReference type="ChEBI" id="CHEBI:167617"/>
        <dbReference type="EC" id="2.1.1.56"/>
    </reaction>
    <physiologicalReaction direction="left-to-right" evidence="2">
        <dbReference type="Rhea" id="RHEA:67009"/>
    </physiologicalReaction>
</comment>
<comment type="cofactor">
    <molecule>Uridylate-specific endoribonuclease nsp15</molecule>
    <cofactor evidence="2">
        <name>Mn(2+)</name>
        <dbReference type="ChEBI" id="CHEBI:29035"/>
    </cofactor>
    <text evidence="2">Likely affects Nsp15 binding to RNA.</text>
</comment>
<comment type="cofactor">
    <molecule>RNA-directed RNA polymerase nsp12</molecule>
    <cofactor evidence="3">
        <name>Mg(2+)</name>
        <dbReference type="ChEBI" id="CHEBI:18420"/>
    </cofactor>
</comment>
<comment type="subunit">
    <molecule>Non-structural protein 2</molecule>
    <text evidence="2">Interacts with host PHB and PHB2.</text>
</comment>
<comment type="subunit">
    <molecule>Non-structural protein 4</molecule>
    <text evidence="2">Interacts with papain-like protease nsp3 and non-structural protein 6.</text>
</comment>
<comment type="subunit">
    <molecule>3C-like proteinase nsp5</molecule>
    <text evidence="2">Monomer. Homodimer. Only the homodimer shows catalytic activity.</text>
</comment>
<comment type="subunit">
    <molecule>Non-structural protein 7</molecule>
    <text evidence="3">Interacts with nsp8 and nsp12 to form the replication-transcription complex (RTC): nsp12, nsp7, two subunits of nsp8, and up to two subunits of nsp13.</text>
</comment>
<comment type="subunit">
    <molecule>Non-structural protein 8</molecule>
    <text evidence="3">Interacts with nsp7, nsp13 and nsp12 to form the replication-transcription complex (RTC): nsp12, nsp7, two subunits of nsp8, and up to two subunits of nsp13.</text>
</comment>
<comment type="subunit">
    <molecule>Viral protein genome-linked nsp9</molecule>
    <text evidence="3">Interacts with nsp12.</text>
</comment>
<comment type="subunit">
    <molecule>Non-structural protein 10</molecule>
    <text evidence="3">Interacts with proofreading exoribonuclease nsp14 and 2'-O-methyltransferase nsp16; these interactions enhance nsp14 and nsp16 enzymatic activities.</text>
</comment>
<comment type="subunit">
    <molecule>RNA-directed RNA polymerase nsp12</molecule>
    <text evidence="3">Interacts with nsp7 and nsp8 to form the replication-transcription complex (RTC): nsp12, nsp7, two subunits of nsp8, and up to two subunits of nsp13. Interacts with nsp9.</text>
</comment>
<comment type="subunit">
    <molecule>Helicase nsp13</molecule>
    <text evidence="3">Interacts with nsp8 to form the replication-transcription complex (RTC): nsp12, nsp7, two subunits of nsp8, and up to two subunits of nsp13.</text>
</comment>
<comment type="subcellular location">
    <molecule>Papain-like proteinase nsp3</molecule>
    <subcellularLocation>
        <location>Host membrane</location>
        <topology>Multi-pass membrane protein</topology>
    </subcellularLocation>
    <subcellularLocation>
        <location evidence="2">Host cytoplasm</location>
    </subcellularLocation>
</comment>
<comment type="subcellular location">
    <molecule>Non-structural protein 4</molecule>
    <subcellularLocation>
        <location>Host membrane</location>
        <topology>Multi-pass membrane protein</topology>
    </subcellularLocation>
    <subcellularLocation>
        <location>Host cytoplasm</location>
    </subcellularLocation>
    <text evidence="2">Localizes in virally-induced cytoplasmic double-membrane vesicles.</text>
</comment>
<comment type="subcellular location">
    <molecule>Non-structural protein 6</molecule>
    <subcellularLocation>
        <location evidence="35">Host membrane</location>
        <topology evidence="35">Multi-pass membrane protein</topology>
    </subcellularLocation>
</comment>
<comment type="subcellular location">
    <molecule>Non-structural protein 7</molecule>
    <subcellularLocation>
        <location evidence="1">Host cytoplasm</location>
        <location evidence="1">Host perinuclear region</location>
    </subcellularLocation>
    <text evidence="1">nsp7, nsp8, nsp9 and nsp10 are localized in cytoplasmic foci, largely perinuclear. Late in infection, they merge into confluent complexes (By similarity).</text>
</comment>
<comment type="subcellular location">
    <molecule>Non-structural protein 8</molecule>
    <subcellularLocation>
        <location evidence="1">Host cytoplasm</location>
        <location evidence="1">Host perinuclear region</location>
    </subcellularLocation>
    <text evidence="1">nsp7, nsp8, nsp9 and nsp10 are localized in cytoplasmic foci, largely perinuclear. Late in infection, they merge into confluent complexes (By similarity).</text>
</comment>
<comment type="subcellular location">
    <molecule>Viral protein genome-linked nsp9</molecule>
    <subcellularLocation>
        <location evidence="1">Host cytoplasm</location>
        <location evidence="1">Host perinuclear region</location>
    </subcellularLocation>
    <text evidence="1">nsp7, nsp8, nsp9 and nsp10 are localized in cytoplasmic foci, largely perinuclear. Late in infection, they merge into confluent complexes (By similarity).</text>
</comment>
<comment type="subcellular location">
    <molecule>Non-structural protein 10</molecule>
    <subcellularLocation>
        <location evidence="1">Host cytoplasm</location>
        <location evidence="1">Host perinuclear region</location>
    </subcellularLocation>
    <text evidence="1">nsp7, nsp8, nsp9 and nsp10 are localized in cytoplasmic foci, largely perinuclear. Late in infection, they merge into confluent complexes (By similarity).</text>
</comment>
<comment type="subcellular location">
    <molecule>Helicase nsp13</molecule>
    <subcellularLocation>
        <location evidence="35">Host endoplasmic reticulum-Golgi intermediate compartment</location>
    </subcellularLocation>
    <text evidence="1">The helicase interacts with the N protein in membranous complexes and colocalizes with sites of synthesis of new viral RNA.</text>
</comment>
<comment type="subcellular location">
    <molecule>Uridylate-specific endoribonuclease nsp15</molecule>
    <subcellularLocation>
        <location evidence="1">Host cytoplasm</location>
        <location evidence="1">Host perinuclear region</location>
    </subcellularLocation>
</comment>
<comment type="alternative products">
    <event type="ribosomal frameshifting"/>
    <isoform>
        <id>P0C6W7-1</id>
        <name>Replicase polyprotein 1ab</name>
        <name>pp1ab</name>
        <sequence type="displayed"/>
    </isoform>
    <isoform>
        <id>P0C6T8-1</id>
        <name>Replicase polyprotein 1a</name>
        <name>pp1a</name>
        <name>ORF1a polyprotein</name>
        <sequence type="external"/>
    </isoform>
</comment>
<comment type="domain">
    <text>The hydrophobic domains (HD) could mediate the membrane association of the replication complex and thereby alter the architecture of the host cell membrane.</text>
</comment>
<comment type="PTM">
    <text evidence="1">Specific enzymatic cleavages in vivo by its own proteases yield mature proteins. 3CL-PRO and PL-PRO proteinases are autocatalytically processed (By similarity).</text>
</comment>
<comment type="miscellaneous">
    <molecule>Isoform Replicase polyprotein 1ab</molecule>
    <text>Produced by -1 ribosomal frameshifting at the 1a-1b genes boundary.</text>
</comment>
<comment type="similarity">
    <text evidence="35">Belongs to the coronaviruses polyprotein 1ab family.</text>
</comment>
<comment type="sequence caution" evidence="35">
    <conflict type="erroneous gene model prediction">
        <sequence resource="EMBL-CDS" id="AAK83365"/>
    </conflict>
</comment>
<dbReference type="EC" id="3.4.19.12"/>
<dbReference type="EC" id="3.4.22.-"/>
<dbReference type="EC" id="2.7.7.48"/>
<dbReference type="EC" id="2.7.7.50"/>
<dbReference type="EC" id="3.6.4.12"/>
<dbReference type="EC" id="3.6.4.13"/>
<dbReference type="EC" id="2.1.1.56"/>
<dbReference type="EC" id="3.1.13.-"/>
<dbReference type="EC" id="4.6.1.-"/>
<dbReference type="EC" id="2.1.1.57"/>
<dbReference type="EMBL" id="AF391541">
    <property type="protein sequence ID" value="AAK83365.1"/>
    <property type="status" value="ALT_SEQ"/>
    <property type="molecule type" value="Genomic_RNA"/>
</dbReference>
<dbReference type="RefSeq" id="NP_150073.2">
    <property type="nucleotide sequence ID" value="NC_003045.1"/>
</dbReference>
<dbReference type="SMR" id="P0C6W7"/>
<dbReference type="MEROPS" id="C16.006"/>
<dbReference type="KEGG" id="vg:921688"/>
<dbReference type="BRENDA" id="3.4.22.B14">
    <property type="organism ID" value="8724"/>
</dbReference>
<dbReference type="Proteomes" id="UP000008570">
    <property type="component" value="Segment"/>
</dbReference>
<dbReference type="GO" id="GO:0044172">
    <property type="term" value="C:host cell endoplasmic reticulum-Golgi intermediate compartment"/>
    <property type="evidence" value="ECO:0007669"/>
    <property type="project" value="UniProtKB-SubCell"/>
</dbReference>
<dbReference type="GO" id="GO:0033644">
    <property type="term" value="C:host cell membrane"/>
    <property type="evidence" value="ECO:0007669"/>
    <property type="project" value="UniProtKB-SubCell"/>
</dbReference>
<dbReference type="GO" id="GO:0044220">
    <property type="term" value="C:host cell perinuclear region of cytoplasm"/>
    <property type="evidence" value="ECO:0007669"/>
    <property type="project" value="UniProtKB-SubCell"/>
</dbReference>
<dbReference type="GO" id="GO:0016020">
    <property type="term" value="C:membrane"/>
    <property type="evidence" value="ECO:0007669"/>
    <property type="project" value="UniProtKB-KW"/>
</dbReference>
<dbReference type="GO" id="GO:0000175">
    <property type="term" value="F:3'-5'-RNA exonuclease activity"/>
    <property type="evidence" value="ECO:0007669"/>
    <property type="project" value="InterPro"/>
</dbReference>
<dbReference type="GO" id="GO:0043139">
    <property type="term" value="F:5'-3' DNA helicase activity"/>
    <property type="evidence" value="ECO:0007669"/>
    <property type="project" value="TreeGrafter"/>
</dbReference>
<dbReference type="GO" id="GO:0005524">
    <property type="term" value="F:ATP binding"/>
    <property type="evidence" value="ECO:0007669"/>
    <property type="project" value="UniProtKB-KW"/>
</dbReference>
<dbReference type="GO" id="GO:0016887">
    <property type="term" value="F:ATP hydrolysis activity"/>
    <property type="evidence" value="ECO:0007669"/>
    <property type="project" value="RHEA"/>
</dbReference>
<dbReference type="GO" id="GO:0004843">
    <property type="term" value="F:cysteine-type deubiquitinase activity"/>
    <property type="evidence" value="ECO:0007669"/>
    <property type="project" value="UniProtKB-EC"/>
</dbReference>
<dbReference type="GO" id="GO:0004197">
    <property type="term" value="F:cysteine-type endopeptidase activity"/>
    <property type="evidence" value="ECO:0007669"/>
    <property type="project" value="InterPro"/>
</dbReference>
<dbReference type="GO" id="GO:0004519">
    <property type="term" value="F:endonuclease activity"/>
    <property type="evidence" value="ECO:0007669"/>
    <property type="project" value="UniProtKB-KW"/>
</dbReference>
<dbReference type="GO" id="GO:0016829">
    <property type="term" value="F:lyase activity"/>
    <property type="evidence" value="ECO:0007669"/>
    <property type="project" value="UniProtKB-KW"/>
</dbReference>
<dbReference type="GO" id="GO:0004483">
    <property type="term" value="F:mRNA (nucleoside-2'-O-)-methyltransferase activity"/>
    <property type="evidence" value="ECO:0007669"/>
    <property type="project" value="InterPro"/>
</dbReference>
<dbReference type="GO" id="GO:0004482">
    <property type="term" value="F:mRNA 5'-cap (guanine-N7-)-methyltransferase activity"/>
    <property type="evidence" value="ECO:0007669"/>
    <property type="project" value="InterPro"/>
</dbReference>
<dbReference type="GO" id="GO:0008242">
    <property type="term" value="F:omega peptidase activity"/>
    <property type="evidence" value="ECO:0007669"/>
    <property type="project" value="InterPro"/>
</dbReference>
<dbReference type="GO" id="GO:0003724">
    <property type="term" value="F:RNA helicase activity"/>
    <property type="evidence" value="ECO:0007669"/>
    <property type="project" value="UniProtKB-EC"/>
</dbReference>
<dbReference type="GO" id="GO:0003968">
    <property type="term" value="F:RNA-directed RNA polymerase activity"/>
    <property type="evidence" value="ECO:0007669"/>
    <property type="project" value="UniProtKB-KW"/>
</dbReference>
<dbReference type="GO" id="GO:0003727">
    <property type="term" value="F:single-stranded RNA binding"/>
    <property type="evidence" value="ECO:0007669"/>
    <property type="project" value="InterPro"/>
</dbReference>
<dbReference type="GO" id="GO:0008270">
    <property type="term" value="F:zinc ion binding"/>
    <property type="evidence" value="ECO:0007669"/>
    <property type="project" value="UniProtKB-KW"/>
</dbReference>
<dbReference type="GO" id="GO:0006351">
    <property type="term" value="P:DNA-templated transcription"/>
    <property type="evidence" value="ECO:0007669"/>
    <property type="project" value="InterPro"/>
</dbReference>
<dbReference type="GO" id="GO:0006508">
    <property type="term" value="P:proteolysis"/>
    <property type="evidence" value="ECO:0007669"/>
    <property type="project" value="UniProtKB-KW"/>
</dbReference>
<dbReference type="GO" id="GO:0010506">
    <property type="term" value="P:regulation of autophagy"/>
    <property type="evidence" value="ECO:0007669"/>
    <property type="project" value="InterPro"/>
</dbReference>
<dbReference type="GO" id="GO:0039520">
    <property type="term" value="P:symbiont-mediated activation of host autophagy"/>
    <property type="evidence" value="ECO:0007669"/>
    <property type="project" value="UniProtKB-KW"/>
</dbReference>
<dbReference type="GO" id="GO:0039595">
    <property type="term" value="P:symbiont-mediated degradation of host mRNA"/>
    <property type="evidence" value="ECO:0007669"/>
    <property type="project" value="UniProtKB-KW"/>
</dbReference>
<dbReference type="GO" id="GO:0039648">
    <property type="term" value="P:symbiont-mediated perturbation of host ubiquitin-like protein modification"/>
    <property type="evidence" value="ECO:0007669"/>
    <property type="project" value="UniProtKB-KW"/>
</dbReference>
<dbReference type="GO" id="GO:0039657">
    <property type="term" value="P:symbiont-mediated suppression of host gene expression"/>
    <property type="evidence" value="ECO:0007669"/>
    <property type="project" value="UniProtKB-KW"/>
</dbReference>
<dbReference type="GO" id="GO:0039579">
    <property type="term" value="P:symbiont-mediated suppression of host ISG15-protein conjugation"/>
    <property type="evidence" value="ECO:0007669"/>
    <property type="project" value="UniProtKB-KW"/>
</dbReference>
<dbReference type="GO" id="GO:0085034">
    <property type="term" value="P:symbiont-mediated suppression of host NF-kappaB cascade"/>
    <property type="evidence" value="ECO:0007669"/>
    <property type="project" value="UniProtKB-KW"/>
</dbReference>
<dbReference type="GO" id="GO:0039502">
    <property type="term" value="P:symbiont-mediated suppression of host type I interferon-mediated signaling pathway"/>
    <property type="evidence" value="ECO:0007669"/>
    <property type="project" value="UniProtKB-KW"/>
</dbReference>
<dbReference type="GO" id="GO:0019082">
    <property type="term" value="P:viral protein processing"/>
    <property type="evidence" value="ECO:0007669"/>
    <property type="project" value="InterPro"/>
</dbReference>
<dbReference type="GO" id="GO:0039694">
    <property type="term" value="P:viral RNA genome replication"/>
    <property type="evidence" value="ECO:0007669"/>
    <property type="project" value="InterPro"/>
</dbReference>
<dbReference type="GO" id="GO:0075523">
    <property type="term" value="P:viral translational frameshifting"/>
    <property type="evidence" value="ECO:0007669"/>
    <property type="project" value="UniProtKB-KW"/>
</dbReference>
<dbReference type="CDD" id="cd21409">
    <property type="entry name" value="1B_cv_Nsp13-like"/>
    <property type="match status" value="1"/>
</dbReference>
<dbReference type="CDD" id="cd21901">
    <property type="entry name" value="alpha_betaCoV_Nsp10"/>
    <property type="match status" value="1"/>
</dbReference>
<dbReference type="CDD" id="cd21560">
    <property type="entry name" value="betaCoV-Nsp6"/>
    <property type="match status" value="1"/>
</dbReference>
<dbReference type="CDD" id="cd21722">
    <property type="entry name" value="betaCoV_Nsp13-helicase"/>
    <property type="match status" value="1"/>
</dbReference>
<dbReference type="CDD" id="cd21659">
    <property type="entry name" value="betaCoV_Nsp14"/>
    <property type="match status" value="1"/>
</dbReference>
<dbReference type="CDD" id="cd21519">
    <property type="entry name" value="betaCoV_Nsp2_MHV-like"/>
    <property type="match status" value="1"/>
</dbReference>
<dbReference type="CDD" id="cd21666">
    <property type="entry name" value="betaCoV_Nsp5_Mpro"/>
    <property type="match status" value="1"/>
</dbReference>
<dbReference type="CDD" id="cd21827">
    <property type="entry name" value="betaCoV_Nsp7"/>
    <property type="match status" value="1"/>
</dbReference>
<dbReference type="CDD" id="cd21831">
    <property type="entry name" value="betaCoV_Nsp8"/>
    <property type="match status" value="1"/>
</dbReference>
<dbReference type="CDD" id="cd21898">
    <property type="entry name" value="betaCoV_Nsp9"/>
    <property type="match status" value="1"/>
</dbReference>
<dbReference type="CDD" id="cd21732">
    <property type="entry name" value="betaCoV_PLPro"/>
    <property type="match status" value="1"/>
</dbReference>
<dbReference type="CDD" id="cd23528">
    <property type="entry name" value="capping_2-OMTase_betaCoV_Nsp16"/>
    <property type="match status" value="1"/>
</dbReference>
<dbReference type="CDD" id="cd21473">
    <property type="entry name" value="cv_Nsp4_TM"/>
    <property type="match status" value="1"/>
</dbReference>
<dbReference type="CDD" id="cd21524">
    <property type="entry name" value="DPUP_MHV_Nsp3"/>
    <property type="match status" value="1"/>
</dbReference>
<dbReference type="CDD" id="cd21593">
    <property type="entry name" value="HCoV_HKU1-like_RdRp"/>
    <property type="match status" value="1"/>
</dbReference>
<dbReference type="CDD" id="cd21167">
    <property type="entry name" value="M_alpha_beta_cv_Nsp15-like"/>
    <property type="match status" value="1"/>
</dbReference>
<dbReference type="CDD" id="cd21557">
    <property type="entry name" value="Macro_X_Nsp3-like"/>
    <property type="match status" value="1"/>
</dbReference>
<dbReference type="CDD" id="cd21879">
    <property type="entry name" value="MHV-like_Nsp1"/>
    <property type="match status" value="1"/>
</dbReference>
<dbReference type="CDD" id="cd21812">
    <property type="entry name" value="MHV-like_Nsp3_betaSM"/>
    <property type="match status" value="1"/>
</dbReference>
<dbReference type="CDD" id="cd21824">
    <property type="entry name" value="MHV-like_Nsp3_NAB"/>
    <property type="match status" value="1"/>
</dbReference>
<dbReference type="CDD" id="cd21161">
    <property type="entry name" value="NendoU_cv_Nsp15-like"/>
    <property type="match status" value="1"/>
</dbReference>
<dbReference type="CDD" id="cd21171">
    <property type="entry name" value="NTD_alpha_betaCoV_Nsp15-like"/>
    <property type="match status" value="1"/>
</dbReference>
<dbReference type="CDD" id="cd21689">
    <property type="entry name" value="stalk_CoV_Nsp13-like"/>
    <property type="match status" value="1"/>
</dbReference>
<dbReference type="CDD" id="cd21714">
    <property type="entry name" value="TM_Y_MHV-like_Nsp3_C"/>
    <property type="match status" value="1"/>
</dbReference>
<dbReference type="CDD" id="cd21467">
    <property type="entry name" value="Ubl1_cv_Nsp3_N-like"/>
    <property type="match status" value="1"/>
</dbReference>
<dbReference type="CDD" id="cd21401">
    <property type="entry name" value="ZBD_cv_Nsp13-like"/>
    <property type="match status" value="1"/>
</dbReference>
<dbReference type="FunFam" id="3.40.50.150:FF:000162">
    <property type="entry name" value="Orf1ab polyprotein"/>
    <property type="match status" value="1"/>
</dbReference>
<dbReference type="FunFam" id="1.10.150.420:FF:000001">
    <property type="entry name" value="Replicase polyprotein"/>
    <property type="match status" value="1"/>
</dbReference>
<dbReference type="Gene3D" id="1.10.8.1190">
    <property type="match status" value="2"/>
</dbReference>
<dbReference type="Gene3D" id="2.60.120.1680">
    <property type="match status" value="1"/>
</dbReference>
<dbReference type="Gene3D" id="3.10.20.350">
    <property type="match status" value="1"/>
</dbReference>
<dbReference type="Gene3D" id="3.10.20.540">
    <property type="match status" value="1"/>
</dbReference>
<dbReference type="Gene3D" id="3.40.50.11580">
    <property type="match status" value="1"/>
</dbReference>
<dbReference type="Gene3D" id="6.10.140.2090">
    <property type="match status" value="1"/>
</dbReference>
<dbReference type="Gene3D" id="1.10.150.420">
    <property type="entry name" value="Coronavirus nonstructural protein 4 C-terminus"/>
    <property type="match status" value="1"/>
</dbReference>
<dbReference type="Gene3D" id="3.40.220.10">
    <property type="entry name" value="Leucine Aminopeptidase, subunit E, domain 1"/>
    <property type="match status" value="1"/>
</dbReference>
<dbReference type="Gene3D" id="1.10.1840.10">
    <property type="entry name" value="main proteinase (3clpro) structure, domain 3"/>
    <property type="match status" value="1"/>
</dbReference>
<dbReference type="Gene3D" id="3.30.160.820">
    <property type="entry name" value="Nsp15 N-terminal domain-like"/>
    <property type="match status" value="1"/>
</dbReference>
<dbReference type="Gene3D" id="1.10.8.370">
    <property type="entry name" value="nsp7 replicase"/>
    <property type="match status" value="1"/>
</dbReference>
<dbReference type="Gene3D" id="3.30.70.3540">
    <property type="entry name" value="Nsp8 replicase, head domain"/>
    <property type="match status" value="1"/>
</dbReference>
<dbReference type="Gene3D" id="3.40.50.300">
    <property type="entry name" value="P-loop containing nucleotide triphosphate hydrolases"/>
    <property type="match status" value="2"/>
</dbReference>
<dbReference type="Gene3D" id="2.40.10.250">
    <property type="entry name" value="Replicase NSP9"/>
    <property type="match status" value="1"/>
</dbReference>
<dbReference type="Gene3D" id="3.40.50.11020">
    <property type="entry name" value="Replicase polyprotein, nucleic acid-binding domain"/>
    <property type="match status" value="1"/>
</dbReference>
<dbReference type="Gene3D" id="2.40.10.10">
    <property type="entry name" value="Trypsin-like serine proteases"/>
    <property type="match status" value="2"/>
</dbReference>
<dbReference type="Gene3D" id="3.40.50.150">
    <property type="entry name" value="Vaccinia Virus protein VP39"/>
    <property type="match status" value="1"/>
</dbReference>
<dbReference type="InterPro" id="IPR027351">
    <property type="entry name" value="(+)RNA_virus_helicase_core_dom"/>
</dbReference>
<dbReference type="InterPro" id="IPR046443">
    <property type="entry name" value="a/bCoV_NSP1_glob"/>
</dbReference>
<dbReference type="InterPro" id="IPR046440">
    <property type="entry name" value="AV_NSP11N_COV_NSP15M"/>
</dbReference>
<dbReference type="InterPro" id="IPR022570">
    <property type="entry name" value="B-CoV_A_NSP1"/>
</dbReference>
<dbReference type="InterPro" id="IPR046442">
    <property type="entry name" value="bCoV_NSP1_C"/>
</dbReference>
<dbReference type="InterPro" id="IPR050534">
    <property type="entry name" value="Coronavir_polyprotein_1ab"/>
</dbReference>
<dbReference type="InterPro" id="IPR043608">
    <property type="entry name" value="CoV_NSP15_M"/>
</dbReference>
<dbReference type="InterPro" id="IPR043606">
    <property type="entry name" value="CoV_NSP15_N"/>
</dbReference>
<dbReference type="InterPro" id="IPR043613">
    <property type="entry name" value="CoV_NSP2_C"/>
</dbReference>
<dbReference type="InterPro" id="IPR047573">
    <property type="entry name" value="CoV_NSP2_M"/>
</dbReference>
<dbReference type="InterPro" id="IPR049894">
    <property type="entry name" value="COV_NSP3_3ECTO"/>
</dbReference>
<dbReference type="InterPro" id="IPR043611">
    <property type="entry name" value="CoV_NSP3_C"/>
</dbReference>
<dbReference type="InterPro" id="IPR047566">
    <property type="entry name" value="CoV_NSP3_Y"/>
</dbReference>
<dbReference type="InterPro" id="IPR032505">
    <property type="entry name" value="CoV_NSP4_C"/>
</dbReference>
<dbReference type="InterPro" id="IPR043612">
    <property type="entry name" value="CoV_NSP4_N"/>
</dbReference>
<dbReference type="InterPro" id="IPR043502">
    <property type="entry name" value="DNA/RNA_pol_sf"/>
</dbReference>
<dbReference type="InterPro" id="IPR041679">
    <property type="entry name" value="DNA2/NAM7-like_C"/>
</dbReference>
<dbReference type="InterPro" id="IPR022733">
    <property type="entry name" value="DPUP_SUD_C_bCoV"/>
</dbReference>
<dbReference type="InterPro" id="IPR037227">
    <property type="entry name" value="EndoU-like"/>
</dbReference>
<dbReference type="InterPro" id="IPR002589">
    <property type="entry name" value="Macro_dom"/>
</dbReference>
<dbReference type="InterPro" id="IPR043472">
    <property type="entry name" value="Macro_dom-like"/>
</dbReference>
<dbReference type="InterPro" id="IPR044371">
    <property type="entry name" value="Macro_X_NSP3-like"/>
</dbReference>
<dbReference type="InterPro" id="IPR046435">
    <property type="entry name" value="N7_MTase_CoV"/>
</dbReference>
<dbReference type="InterPro" id="IPR043609">
    <property type="entry name" value="NendoU_nidovirus"/>
</dbReference>
<dbReference type="InterPro" id="IPR044863">
    <property type="entry name" value="NIRAN"/>
</dbReference>
<dbReference type="InterPro" id="IPR046438">
    <property type="entry name" value="NIV_2_O_MTASE"/>
</dbReference>
<dbReference type="InterPro" id="IPR046436">
    <property type="entry name" value="NIV_EXON"/>
</dbReference>
<dbReference type="InterPro" id="IPR036333">
    <property type="entry name" value="NSP10_sf_CoV"/>
</dbReference>
<dbReference type="InterPro" id="IPR047570">
    <property type="entry name" value="NSP12_IF_CoV"/>
</dbReference>
<dbReference type="InterPro" id="IPR044343">
    <property type="entry name" value="NSP13_1B_dom_CoV"/>
</dbReference>
<dbReference type="InterPro" id="IPR048673">
    <property type="entry name" value="NSP13_stalk_CoV"/>
</dbReference>
<dbReference type="InterPro" id="IPR048672">
    <property type="entry name" value="NSP13_ZBD_CoV"/>
</dbReference>
<dbReference type="InterPro" id="IPR027352">
    <property type="entry name" value="NSP13_ZBD_CoV-like"/>
</dbReference>
<dbReference type="InterPro" id="IPR044315">
    <property type="entry name" value="NSP14_betaCoV"/>
</dbReference>
<dbReference type="InterPro" id="IPR009466">
    <property type="entry name" value="NSP14_CoV"/>
</dbReference>
<dbReference type="InterPro" id="IPR044330">
    <property type="entry name" value="NSP15_alpha_betaCoV_N"/>
</dbReference>
<dbReference type="InterPro" id="IPR044322">
    <property type="entry name" value="NSP15_M_alpha_beta_CoV"/>
</dbReference>
<dbReference type="InterPro" id="IPR043174">
    <property type="entry name" value="NSP15_middle_sf"/>
</dbReference>
<dbReference type="InterPro" id="IPR042515">
    <property type="entry name" value="NSP15_N_CoV"/>
</dbReference>
<dbReference type="InterPro" id="IPR044401">
    <property type="entry name" value="NSP15_NendoU_CoV"/>
</dbReference>
<dbReference type="InterPro" id="IPR009461">
    <property type="entry name" value="NSP16_CoV-like"/>
</dbReference>
<dbReference type="InterPro" id="IPR044384">
    <property type="entry name" value="NSP2_MHV-like"/>
</dbReference>
<dbReference type="InterPro" id="IPR043615">
    <property type="entry name" value="NSP2_N_CoV"/>
</dbReference>
<dbReference type="InterPro" id="IPR044381">
    <property type="entry name" value="NSP3_DPUP_MHV"/>
</dbReference>
<dbReference type="InterPro" id="IPR047567">
    <property type="entry name" value="NSP3_G2M_bCoV"/>
</dbReference>
<dbReference type="InterPro" id="IPR032592">
    <property type="entry name" value="NSP3_NAB_bCoV"/>
</dbReference>
<dbReference type="InterPro" id="IPR042570">
    <property type="entry name" value="NSP3_NAB_bCoV_sf"/>
</dbReference>
<dbReference type="InterPro" id="IPR044357">
    <property type="entry name" value="NSP3_Ubl1_dom_CoV"/>
</dbReference>
<dbReference type="InterPro" id="IPR044353">
    <property type="entry name" value="Nsp3_Ubl2_dom_CoV"/>
</dbReference>
<dbReference type="InterPro" id="IPR038083">
    <property type="entry name" value="NSP3A-like"/>
</dbReference>
<dbReference type="InterPro" id="IPR038123">
    <property type="entry name" value="NSP4_C_sf_CoV"/>
</dbReference>
<dbReference type="InterPro" id="IPR044367">
    <property type="entry name" value="NSP6_betaCoV"/>
</dbReference>
<dbReference type="InterPro" id="IPR043610">
    <property type="entry name" value="NSP6_CoV"/>
</dbReference>
<dbReference type="InterPro" id="IPR014828">
    <property type="entry name" value="NSP7_CoV"/>
</dbReference>
<dbReference type="InterPro" id="IPR037204">
    <property type="entry name" value="NSP7_sf_CoV"/>
</dbReference>
<dbReference type="InterPro" id="IPR014829">
    <property type="entry name" value="NSP8_CoV"/>
</dbReference>
<dbReference type="InterPro" id="IPR037230">
    <property type="entry name" value="NSP8_sf_CoV"/>
</dbReference>
<dbReference type="InterPro" id="IPR014822">
    <property type="entry name" value="NSP9_CoV"/>
</dbReference>
<dbReference type="InterPro" id="IPR036499">
    <property type="entry name" value="NSP9_sf_CoV"/>
</dbReference>
<dbReference type="InterPro" id="IPR027417">
    <property type="entry name" value="P-loop_NTPase"/>
</dbReference>
<dbReference type="InterPro" id="IPR002705">
    <property type="entry name" value="Pept_C30/C16_B_coronavir"/>
</dbReference>
<dbReference type="InterPro" id="IPR013016">
    <property type="entry name" value="Peptidase_C16_CoV"/>
</dbReference>
<dbReference type="InterPro" id="IPR008740">
    <property type="entry name" value="Peptidase_C30_CoV"/>
</dbReference>
<dbReference type="InterPro" id="IPR043477">
    <property type="entry name" value="Peptidase_C30_dom3_CoV"/>
</dbReference>
<dbReference type="InterPro" id="IPR009003">
    <property type="entry name" value="Peptidase_S1_PA"/>
</dbReference>
<dbReference type="InterPro" id="IPR043504">
    <property type="entry name" value="Peptidase_S1_PA_chymotrypsin"/>
</dbReference>
<dbReference type="InterPro" id="IPR043177">
    <property type="entry name" value="PLpro_N_sf_CoV"/>
</dbReference>
<dbReference type="InterPro" id="IPR043503">
    <property type="entry name" value="PLpro_palm_finger_dom_CoV"/>
</dbReference>
<dbReference type="InterPro" id="IPR043178">
    <property type="entry name" value="PLpro_thumb_sf_CoV"/>
</dbReference>
<dbReference type="InterPro" id="IPR046441">
    <property type="entry name" value="RdRp_CoV"/>
</dbReference>
<dbReference type="InterPro" id="IPR044347">
    <property type="entry name" value="RdRp_HCoV_HKU1-like"/>
</dbReference>
<dbReference type="InterPro" id="IPR009469">
    <property type="entry name" value="RdRp_N_CoV"/>
</dbReference>
<dbReference type="InterPro" id="IPR001205">
    <property type="entry name" value="RNA-dir_pol_C"/>
</dbReference>
<dbReference type="InterPro" id="IPR007094">
    <property type="entry name" value="RNA-dir_pol_PSvirus"/>
</dbReference>
<dbReference type="InterPro" id="IPR018995">
    <property type="entry name" value="RNA_synth_NSP10_CoV"/>
</dbReference>
<dbReference type="InterPro" id="IPR029063">
    <property type="entry name" value="SAM-dependent_MTases_sf"/>
</dbReference>
<dbReference type="PANTHER" id="PTHR43788">
    <property type="entry name" value="DNA2/NAM7 HELICASE FAMILY MEMBER"/>
    <property type="match status" value="1"/>
</dbReference>
<dbReference type="PANTHER" id="PTHR43788:SF16">
    <property type="entry name" value="HELICASE WITH ZINC FINGER 2"/>
    <property type="match status" value="1"/>
</dbReference>
<dbReference type="Pfam" id="PF13087">
    <property type="entry name" value="AAA_12"/>
    <property type="match status" value="1"/>
</dbReference>
<dbReference type="Pfam" id="PF13604">
    <property type="entry name" value="AAA_30"/>
    <property type="match status" value="1"/>
</dbReference>
<dbReference type="Pfam" id="PF11963">
    <property type="entry name" value="B-CoV_A_NSP1"/>
    <property type="match status" value="1"/>
</dbReference>
<dbReference type="Pfam" id="PF16251">
    <property type="entry name" value="bCoV_NAB"/>
    <property type="match status" value="1"/>
</dbReference>
<dbReference type="Pfam" id="PF06471">
    <property type="entry name" value="CoV_ExoN"/>
    <property type="match status" value="1"/>
</dbReference>
<dbReference type="Pfam" id="PF06460">
    <property type="entry name" value="CoV_Methyltr_2"/>
    <property type="match status" value="1"/>
</dbReference>
<dbReference type="Pfam" id="PF09401">
    <property type="entry name" value="CoV_NSP10"/>
    <property type="match status" value="1"/>
</dbReference>
<dbReference type="Pfam" id="PF20631">
    <property type="entry name" value="CoV_NSP13_1B"/>
    <property type="match status" value="1"/>
</dbReference>
<dbReference type="Pfam" id="PF20633">
    <property type="entry name" value="CoV_NSP13_stalk"/>
    <property type="match status" value="1"/>
</dbReference>
<dbReference type="Pfam" id="PF20632">
    <property type="entry name" value="CoV_NSP13_ZBD"/>
    <property type="match status" value="1"/>
</dbReference>
<dbReference type="Pfam" id="PF19215">
    <property type="entry name" value="CoV_NSP15_C"/>
    <property type="match status" value="1"/>
</dbReference>
<dbReference type="Pfam" id="PF19216">
    <property type="entry name" value="CoV_NSP15_M"/>
    <property type="match status" value="1"/>
</dbReference>
<dbReference type="Pfam" id="PF19219">
    <property type="entry name" value="CoV_NSP15_N"/>
    <property type="match status" value="1"/>
</dbReference>
<dbReference type="Pfam" id="PF19218">
    <property type="entry name" value="CoV_NSP3_C"/>
    <property type="match status" value="1"/>
</dbReference>
<dbReference type="Pfam" id="PF16348">
    <property type="entry name" value="CoV_NSP4_C"/>
    <property type="match status" value="1"/>
</dbReference>
<dbReference type="Pfam" id="PF19217">
    <property type="entry name" value="CoV_NSP4_N"/>
    <property type="match status" value="1"/>
</dbReference>
<dbReference type="Pfam" id="PF19213">
    <property type="entry name" value="CoV_NSP6"/>
    <property type="match status" value="1"/>
</dbReference>
<dbReference type="Pfam" id="PF08716">
    <property type="entry name" value="CoV_NSP7"/>
    <property type="match status" value="1"/>
</dbReference>
<dbReference type="Pfam" id="PF08717">
    <property type="entry name" value="CoV_NSP8"/>
    <property type="match status" value="1"/>
</dbReference>
<dbReference type="Pfam" id="PF08710">
    <property type="entry name" value="CoV_NSP9"/>
    <property type="match status" value="1"/>
</dbReference>
<dbReference type="Pfam" id="PF08715">
    <property type="entry name" value="CoV_peptidase"/>
    <property type="match status" value="1"/>
</dbReference>
<dbReference type="Pfam" id="PF06478">
    <property type="entry name" value="CoV_RPol_N"/>
    <property type="match status" value="1"/>
</dbReference>
<dbReference type="Pfam" id="PF01661">
    <property type="entry name" value="Macro"/>
    <property type="match status" value="1"/>
</dbReference>
<dbReference type="Pfam" id="PF22104">
    <property type="entry name" value="MHV_Nsp3_DPUP"/>
    <property type="match status" value="1"/>
</dbReference>
<dbReference type="Pfam" id="PF01831">
    <property type="entry name" value="Peptidase_C16"/>
    <property type="match status" value="1"/>
</dbReference>
<dbReference type="Pfam" id="PF05409">
    <property type="entry name" value="Peptidase_C30"/>
    <property type="match status" value="1"/>
</dbReference>
<dbReference type="Pfam" id="PF00680">
    <property type="entry name" value="RdRP_1"/>
    <property type="match status" value="1"/>
</dbReference>
<dbReference type="SMART" id="SM00506">
    <property type="entry name" value="A1pp"/>
    <property type="match status" value="1"/>
</dbReference>
<dbReference type="SUPFAM" id="SSF144246">
    <property type="entry name" value="Coronavirus NSP10-like"/>
    <property type="match status" value="1"/>
</dbReference>
<dbReference type="SUPFAM" id="SSF140367">
    <property type="entry name" value="Coronavirus NSP7-like"/>
    <property type="match status" value="1"/>
</dbReference>
<dbReference type="SUPFAM" id="SSF143076">
    <property type="entry name" value="Coronavirus NSP8-like"/>
    <property type="match status" value="1"/>
</dbReference>
<dbReference type="SUPFAM" id="SSF56672">
    <property type="entry name" value="DNA/RNA polymerases"/>
    <property type="match status" value="1"/>
</dbReference>
<dbReference type="SUPFAM" id="SSF142877">
    <property type="entry name" value="EndoU-like"/>
    <property type="match status" value="1"/>
</dbReference>
<dbReference type="SUPFAM" id="SSF52949">
    <property type="entry name" value="Macro domain-like"/>
    <property type="match status" value="1"/>
</dbReference>
<dbReference type="SUPFAM" id="SSF159936">
    <property type="entry name" value="NSP3A-like"/>
    <property type="match status" value="1"/>
</dbReference>
<dbReference type="SUPFAM" id="SSF52540">
    <property type="entry name" value="P-loop containing nucleoside triphosphate hydrolases"/>
    <property type="match status" value="1"/>
</dbReference>
<dbReference type="SUPFAM" id="SSF101816">
    <property type="entry name" value="Replicase NSP9"/>
    <property type="match status" value="1"/>
</dbReference>
<dbReference type="SUPFAM" id="SSF53335">
    <property type="entry name" value="S-adenosyl-L-methionine-dependent methyltransferases"/>
    <property type="match status" value="1"/>
</dbReference>
<dbReference type="SUPFAM" id="SSF50494">
    <property type="entry name" value="Trypsin-like serine proteases"/>
    <property type="match status" value="1"/>
</dbReference>
<dbReference type="PROSITE" id="PS51961">
    <property type="entry name" value="AV_NSP11N_COV_NSP15M"/>
    <property type="match status" value="1"/>
</dbReference>
<dbReference type="PROSITE" id="PS51963">
    <property type="entry name" value="BCOV_NSP1_C"/>
    <property type="match status" value="1"/>
</dbReference>
<dbReference type="PROSITE" id="PS51942">
    <property type="entry name" value="BCOV_NSP3C_C"/>
    <property type="match status" value="1"/>
</dbReference>
<dbReference type="PROSITE" id="PS51994">
    <property type="entry name" value="BCOV_NSP3E_G2M"/>
    <property type="match status" value="1"/>
</dbReference>
<dbReference type="PROSITE" id="PS51945">
    <property type="entry name" value="BCOV_NSP3E_NAB"/>
    <property type="match status" value="1"/>
</dbReference>
<dbReference type="PROSITE" id="PS51993">
    <property type="entry name" value="COV_3ECTO"/>
    <property type="match status" value="1"/>
</dbReference>
<dbReference type="PROSITE" id="PS51952">
    <property type="entry name" value="COV_EXON_MTASE_COACT"/>
    <property type="match status" value="1"/>
</dbReference>
<dbReference type="PROSITE" id="PS51954">
    <property type="entry name" value="COV_N7_MTASE"/>
    <property type="match status" value="1"/>
</dbReference>
<dbReference type="PROSITE" id="PS51962">
    <property type="entry name" value="COV_NSP1"/>
    <property type="match status" value="1"/>
</dbReference>
<dbReference type="PROSITE" id="PS52000">
    <property type="entry name" value="COV_NSP12_IF"/>
    <property type="match status" value="1"/>
</dbReference>
<dbReference type="PROSITE" id="PS51948">
    <property type="entry name" value="COV_NSP12_RDRP"/>
    <property type="match status" value="1"/>
</dbReference>
<dbReference type="PROSITE" id="PS51960">
    <property type="entry name" value="COV_NSP15_NTD"/>
    <property type="match status" value="1"/>
</dbReference>
<dbReference type="PROSITE" id="PS51991">
    <property type="entry name" value="COV_NSP2_C"/>
    <property type="match status" value="1"/>
</dbReference>
<dbReference type="PROSITE" id="PS51990">
    <property type="entry name" value="COV_NSP2_M"/>
    <property type="match status" value="1"/>
</dbReference>
<dbReference type="PROSITE" id="PS51989">
    <property type="entry name" value="COV_NSP2_N"/>
    <property type="match status" value="1"/>
</dbReference>
<dbReference type="PROSITE" id="PS51992">
    <property type="entry name" value="COV_NSP3_Y"/>
    <property type="match status" value="1"/>
</dbReference>
<dbReference type="PROSITE" id="PS51943">
    <property type="entry name" value="COV_NSP3A_UBL"/>
    <property type="match status" value="1"/>
</dbReference>
<dbReference type="PROSITE" id="PS51944">
    <property type="entry name" value="COV_NSP3D_UBL"/>
    <property type="match status" value="1"/>
</dbReference>
<dbReference type="PROSITE" id="PS51946">
    <property type="entry name" value="COV_NSP4C"/>
    <property type="match status" value="1"/>
</dbReference>
<dbReference type="PROSITE" id="PS51949">
    <property type="entry name" value="COV_NSP7"/>
    <property type="match status" value="1"/>
</dbReference>
<dbReference type="PROSITE" id="PS51950">
    <property type="entry name" value="COV_NSP8"/>
    <property type="match status" value="1"/>
</dbReference>
<dbReference type="PROSITE" id="PS51951">
    <property type="entry name" value="COV_NSP9_SSRNA_BD"/>
    <property type="match status" value="1"/>
</dbReference>
<dbReference type="PROSITE" id="PS51653">
    <property type="entry name" value="CV_ZBD"/>
    <property type="match status" value="1"/>
</dbReference>
<dbReference type="PROSITE" id="PS51442">
    <property type="entry name" value="M_PRO"/>
    <property type="match status" value="1"/>
</dbReference>
<dbReference type="PROSITE" id="PS51154">
    <property type="entry name" value="MACRO"/>
    <property type="match status" value="1"/>
</dbReference>
<dbReference type="PROSITE" id="PS51958">
    <property type="entry name" value="NENDOU"/>
    <property type="match status" value="1"/>
</dbReference>
<dbReference type="PROSITE" id="PS51947">
    <property type="entry name" value="NIRAN"/>
    <property type="match status" value="1"/>
</dbReference>
<dbReference type="PROSITE" id="PS51955">
    <property type="entry name" value="NIV_2_O_MTASE"/>
    <property type="match status" value="1"/>
</dbReference>
<dbReference type="PROSITE" id="PS51953">
    <property type="entry name" value="NIV_EXON"/>
    <property type="match status" value="1"/>
</dbReference>
<dbReference type="PROSITE" id="PS51124">
    <property type="entry name" value="PEPTIDASE_C16"/>
    <property type="match status" value="2"/>
</dbReference>
<dbReference type="PROSITE" id="PS51657">
    <property type="entry name" value="PSRV_HELICASE"/>
    <property type="match status" value="1"/>
</dbReference>
<dbReference type="PROSITE" id="PS50507">
    <property type="entry name" value="RDRP_SSRNA_POS"/>
    <property type="match status" value="1"/>
</dbReference>
<organism>
    <name type="scientific">Bovine coronavirus (strain 98TXSF-110-ENT)</name>
    <name type="common">BCoV-ENT</name>
    <name type="synonym">BCV</name>
    <dbReference type="NCBI Taxonomy" id="233262"/>
    <lineage>
        <taxon>Viruses</taxon>
        <taxon>Riboviria</taxon>
        <taxon>Orthornavirae</taxon>
        <taxon>Pisuviricota</taxon>
        <taxon>Pisoniviricetes</taxon>
        <taxon>Nidovirales</taxon>
        <taxon>Cornidovirineae</taxon>
        <taxon>Coronaviridae</taxon>
        <taxon>Orthocoronavirinae</taxon>
        <taxon>Betacoronavirus</taxon>
        <taxon>Embecovirus</taxon>
        <taxon>Betacoronavirus 1</taxon>
    </lineage>
</organism>
<sequence>MSKINKYGLELHWAPEFPWMFEDAEEKLDNPSSSEVDIVCSTTAQKLETGGICPENHVMVDCRRLLKQECCVQSSLIREIVMNTRPYDLEVLLQDALQSREAVLVTPPLGMSLEACYVRGCNPNGWTMGLFRRRSVCNTGRCAVNKHVAYQLYMIDPAGVCFGAGQFVGWVIPLAFMPVQSRKFIVPWVMYLRKCGEKGAYNKDHKRGGFEHVYNFKVEDAYDLVHDEPKGKFSKKAYALIRGYRGVKPLLYVDQYGCDYTGGLADGLEAYADKTLQEMKALFPIWSQELPFDVTVAWHVVRDPRYVMRLQSASTIRSVAYVANPTEDLCDGSVVIKEPVHVYADDSIILRQHNLVDIMSCFYMEADAVVNAFYGVDLKDCGFVMQFGYIDCEQDLCDFKGWVPGNMIDGFACTTCGHVYETGDLLAQSSGVLPVNPVLHTKSAAGYGGFGCKDSFTLYGQTVVYFGGCVYWSPARNIWIPILKSSVKSYDGLVYTGVVGCKAIVKETNLICKALYLDYVQHKCGNLHQRELLGVSDVWHKQLLLNRGVYKPLLENIDYFNMRRAKFSLETFTVCADGFMPFLLDDLVPRAYYLAVSGQAFCDYADKICHAVVSKSKELLDVSLDSLSAAIHYLNSKIVDLAQHFSDFGTSFVSKIVHFFKTFTTSTALAFAWVLFHVLHGAYIVVESDIYFVKNIPRYASAVAQAFRSVAKVVLDSLRVTFIDGLSCFKIGRRRICLSGSKIYEVERGLLHSSQLPLDVYDLTMPSQVQKAKQKPIYLKGSGSDFSLADSVVEVVTTSLTPCGYSEPPKVADKICIVDNVYMAKAGDKYYPVVVDGHVGLLDQAWRVPCAGRRVTFKEQPTVNEIASTPKTIKVFYELDKDFNTILNTACGVFEVDDTVDMEEFYAVVIDAIEEKLSPCKELEGVGAKVSAFLQKLEDNSLFLFDEAGEEVLASKLYCAFTAPEDDDFLEESGVEEDDVEGEETDLTVTSAGEPCVASEQEESSEILEDTLDDGPCVETSDSQVEEDVEMSDFADLESVIQDYENVCFEFYTTEPEFVKVLDLYVPKATRNNCWLRSVLAVMQKLPCQFKDKNLQDLWVLYKQQYSQLFVDTLVNKIPANIVVPQGGYVADFAYWFLTLCDWQCVAYWKCIKCDLALKLKGLDAMFFYGDVVSHVCKCGESMVLIDVDVPFTAHFALKDKLFCAFITKRSVYKAACVVDVNDSHSMAVVDGKQIDDHRVTSITSDKFDFIIGHGMSFSMTTFEIAQLYGSCITPNVCFVKGDIIKVSKRVKAEVVVNPANGHMAHGGGVAKAIAVAAGQQFVKETTDMVKSKGVCATGDCYVSTGGKLCKTVLNVVGPDARTQGKQSYALLERVYKHLNKYDCVVTTLISAGIFSVPSDVSLTYLLGTAEKQVVLVSNNQEDFDLISKCQITAVEGTKKLAERLSFNVGRSIVYETDANKLILSNDVAFVSTFNVLQDVLSLRHDIALDDDARTFVQSNVDVVPEGWRVVNKFYQINGVRTVKYFECPGGIDICSQDKVFGYVQQGSFNKATVAQIKALFLDKVDILLTVDGVNFTNRFVPVGESFGKSLGNVFCDGVNVTKHKCDINYKGKVFFQFDNLSSEDLKAVRSSFNFDQKELLAYYNMLVNCSKWQVVFNGKYFTFKQANNNCFVNVSCLMLQSLNLKFKIVQWQEAWLEFRSGRPARFVSLVLAKGGFKFGDPADSRDFLRVVFSQVDLTGAICDFEIACKCGVKQEQRTGVDAVMHFGTLSREDLEIGYTVDCSCGKKLIHCVRFDVPFLICSNTPASVKLPKGVGSANIFKGDKVGHYVHVKCEQSYQLYDASNVKKVTDVTGNLSDCLYLKNLKQTFKSVLTTYYLDDVKKIEYNPDLSQYYCDGGKYYTQRIIKAQFKTFEKVDGVYTNFKLIGHTICDILNAKLGFDSSKEFVEYKVTEWPTATGDVVLATDDLYVKRYERGCITFGKPVIWLSHEQASLNSLTYFNRPLLVDENKFDVLKVDDVDDGGDISESDAKESKEINIIKLSGVKKPFKVEDSVIVNDDTSEIKYVKSLSIVDVYDMWLTGCRYVVRTANALSMAVNVPTIRKFIKFGMTLVSIPIDLLNLREIKPVFNVVKAVRNKISACFNFIKWLFVLLFGWIKISADNKVIYTTEVASKLTCKLVALAFKNAFLTFKWSVVARGACIIATIFLLWFNFIYANVIFSDFYLPKIGFLPTFVGKIAQWIKSTFSLVTICDLYSIQDVGFKNQYCNGSIACQFCLAGFDMLDNYKAIDVVQYEADRRAFVDYTGVLKIVIELIVSYALYTAWFYPLFALISIQILTTWLPELFMLSTLHWSVRLLVSLANMLPAHVFMRFYIIIASFIKLFILFRHVAYGCSKPGCLFCYKRNRSLRVKCSTIVGGMIRYYDVMANGGTGFCSKHQWNCIDCDSYKPGNTFITVEAALDLSKELKRPIQPTDVAYHTVTDVKQVGCYMRLFYERDGQRTYDDVNASLFVDYSNLLHSKVKGVPNMHVVVVENDADKANFLNAAVFYAQSLFRPILMVDKNLITTANTGTSVTETMFDVYVDTFLSMFDVDKKSLNALIATAHSSIKQGTQICKVLDTFLSCARKSCSIDSDVDTKCLADSVMSAVSAGLELTDESCNNLVPTYLKGDNIVAADLGVLIQNSAKHVQGNVAKIAGVSCIWSVDAFNQLSSDFQHKLKKACCKTGLKLKLTYNKQMANVSVLTTPFSLKGGAVFSYFVYVCFLLSLVCFIGLWCLMPTYTVHKSDFQLPVYASYKVLDNGVIRDVSVEDVCFANKFEQFDQWYESTFGLSYYSNSMACPIVVAVVDQDLGSTVFNVPTKVLRYGYHVLHFITHALSADGVQCYTPHSQISYSNFYASGCVLSSACTMFAMADGSPQPYCYTEGLMQNASLYSSLVPHVRYNLANAKGFIRFPEVLREGLVRIVRTRSMSYCRVGLCEEADEGICFNFNGSWVLNNDYYRSLPGTFCGRDVFDLIYQLFKGLAQPVDFLALTASSIAGAILAVIVVLVFYYLIKLKRAFGDYTSIVFVNVIVWCVNFMMLFVFQVYPTLSCVYAICYFYATLYFPSEISVIMHLQWLVMYGTIMPLWFCLLYISVVVSNHAFWVFAYCRRLGTSVRSDGTFEEMALTTFMITKDSYCKLKNSLSDVAFNRYLSLYNKYRYYSGKMDTAAYREAACSQLAKAMDTFTNNNGSDVLYQPPTASVSTSFLQSGIVKMVNPTSKVEPCIVSVTYGNMTLNGLWLDDKVYCPRHVICSASDMTNPDYTNLLCRVTSSDFTVLFDRLSLTVMSYQMQGCMLVLTVTLQNSRTPKYTFGVVKPGETFTVLAAYNGKPQGAFHVTMRSSYTIKGSFLCGSCGSVGYVLMGDCVKFVYMHQLELSTGCHTGTDFNGDFYGPYKDAQVVQLPVQDYIQSVNFVAWLYAAILNNCNWFVQSDKCSVEDFNVWALSNGFSQVKSDLVIDALASMTGVSLETLLAAIKRLKNGFQGRQIMGSCSFEDELTPSDVYQQLAGIKLQSKRTRLVKGIVCWIMASTFLFSCIITAFVKWTMFMYVTTNMLSITFCALCVISLAMLLVKHKHLYLTMYIIPVLFTLLYNNYLVVYKQTFRGYVYAWLSYYVPSVEYTYTDEVIYGMLLLIGMVFVTLRSINHDLFSFIMFVGRVISVVSLWYMGSNLEEEILLMLASLFGTYTWTTALSMAAAKVIAKWVAVNVLYFTDIPQIKIVLVCYLFIGYIISCYWGLFSLMNSLFRMPLGVYNYKISVQELRYMNANGLRPPKNSFEALMLNFKLLGIGGVPIIEVSQFQSKLTDVKCANVVLLNCLQHLHVASNSKLWQYCSTLHNEILATSDLGVAFEKLAQLLIVLFANPAAVDSKCLTSIEEVCDDYAKDNTVLQALQSEFVNMASFVEYEVAKKNLDEARSSGSANQQQLKQLEKACNIAKSAYERDRAVARKLERMADLALTNMYKEARINDKKSKVVSALQTMLFSMVRKLDNQALNSILDNAVKGCVPLNAIPSLAANTLTIIVPDKSVYDQVVDNVYVTYAGNVWQIQTIQDSDGTNKQLNEISDDCNWPLVIIANRHNEVSATVLQNNELMPAKLKTQVVNSGPDQTCNTPTQCYYNNSNNGKIVYAILSDVDGLKYTKILKDDGNFVVLELDPPCKFTVQDVKGLKIKYLYFVKGCNTLARGWVVGTISSTVRLQAGTATEYASNSSILSLCAFSVDPKKTYLDFIQQGGTPIANCVKMLCDHAGTGMAITVKPDATTNQDSYGGASVCIYCRARVEHPDVDGLCKLRGKFVQVPVGIKDPVSYVLTHDVCQVCGFWRDGSCSCVSTDTTVQSKDTNFLNRVRGTSVDARLVPCASGLSTDVQLRAFDICNASVAGIGLHLKVNCCRFQRVDENGDKLDQFFVVKRTDLTIYNREMECYERVKDCKFVAEHDFFTFDVEGSRVPHIVRKDLTKYTMLDLCYALRHFDRNDCMLLCDILSIYAGCEQSYFTKKDWYDFVENPDIINVYKKLGPIFNRALVSATEFADKLVEVGLVGILTLDNQDLNGKWYDFGDYVIAAPGCGVAIADSYYSYMMPMLTMCHALDCELYVNNAYRLFDLVQYDFTDYKLELFNKYFKHWSMPYHPNTVDCQDDRCIIHCANFNILFSMVLPNTCFGPLVRQIFVDGVPFVVSIGYHYKELGIVMNMDVDTHRYRLSLKDLLLYAADPALHVASASALYDLRTCCFSVAAITSGVKFQTVKPGNFNQDFYDFILSKGLLKEGSSVDLKHFFFTQDGNAAITDYNYYKYNLPTMVDIKQLLFVLEVVYKYFEIYDGGCIPASQVIVNNYDKSAGYPFNKFGKARLYYEALSFEEQDEIYAYTKRNVLPTLTQMNLKYAISAKNRARTVAGVSILSTMTGRMFHQKCLKSIAATRGVPVVIGTTKFYGGWDDMLRRLIKDVDNPVLMGWDYPKCDRAMPNILRIVSSLVLARKHEACCSQSDRFYRLANECAQVLSEIVMCGGCYYVKPGGTSSGDATTAFANSVFNICQAVSANVCALMSCNGNKIEDLSIRALQKRLYSHVYRSDMVDSTFVTEYYEFLNKHFSMMILSDDGVVCYNSDYASKGYIANISAFQQVLYYQNNVFMSESKCWVENDINNGPHEFCSQHTMLVKMDGDDVYLPYPDPSRILGAGCFVDDLLKTDSVLLIERFVSLAIDAYPLVYHENEEYQKVFRVYLEYIKKLYNDLGNQILDSYSVILSTCDGQKFTDESFYKNMYLRSAVMQSVGACVVCSSQTSLRCGSCIRKPLLCCKCCYDHVMATDHKYVLSVSPYVCNAPGCDVNDVTKLYLGGMSYYCEDHKPQYSFKLVMNGMVFGLYKQSCTGSPYIDDFNRIASCKWTDVDDYILANECTERLKLFAAETQKATEEAFKQSYASATIQEIVSERELILSWEIGKVKPPLNKNYVFTGYHFTKNGKTVLGEYVFDKSELTNGVYYRATTTYKLSVGDVFVLTSHSVANLSAPTLVPQENYSSIRFASVYSVLETFQNNVVNYQHIGMKRYCTVQGPPGTGKSHLAIGLAVYYCTARVVYTAASHAAVDALCEKAYKFLNINDCTRIVPAKVRVECYDKFKINDTTRKYVFTTINALPEMVTDIVVVDEVSMLTNYELSVINARIRAKHYVYIGDPAQLPAPRVLLSKGTLEPKYFNTVTKLMCCLGPDIFLGTCYRCPKEIVDTVSALVYENKLKAKNESSSLCFKVYYKGVTTHESSSAVNMQQIYLINKFLKANPLWHKAVFISPYNSQNFAAKRVLGLQTQTVDSAQGSEYDYVIYSQTAETAHSVNVNRFNVAITRAKKGILCVMSNMQLFEALQFTTLTLDKVPQAVETRVQCSTNLFKDCSKSYSGYHPAHAPSFLAVDDKYKATGDLAVCLGIGDSAVTYSRLISLMGFKLDVTLDGYCKLFITKEEAVKRVRAWVGFDAEGAHATRDSIGTNFPLQLGFSTGIDFVVEATGLFADRDGYSFKKAVAKAPPGEQFKHLIPLMTRGQRWDVVRPRIVQMFADHLIDLSDCVVLVTWAANFELTCLRYFAKVGREISCNVCTKRATAYNSRTGYYGCWRHSVTCDYLYNPLIVDIQQWGYIGSLSSNHDLYCSVHKGAHVASSDAIMTRCLAVYDCFCNNINWNVEYPIISNELSINTSCRVLQRVMLKAAMLCNRYTLCYDIGNPKAIACVKDFDFKFYDAQPIVKSVKTLLYSFEAHKDSFKDGLCMFWNCNVDKYPPNAVVCRFDTRVLNNLNLPGCNGGSLYVNKHAFHTKPFSRAAFEHLKPMPFFYYSDTPCVYMDGMDAKQVDYVPLKSATCITRCNLGGAVCLKHAEEYREYLESYNTATTAGFTFWVYKTFDFYNLWNTFTKLQSLENVVYNLVKTGHYTGQAGEMPCAIINDKVVAKIDKEDVVIFINNTTYPTNVAVELFAKRSIRHHPELKLFRNLNIDVCWKHVIWDYARESIFCSNTYGVCMYTDLKFIDKLNVLFDGRDNGALEAFKRSNNGVYISTTKVKSLSMIKGPPRAELNGVVVDKVGDTDCVFYFAVRKEGQDVIFSQFDSLRVSSNQSPQGNLGSNEPGNVGGNDALATSTIFTQSRVISSFTCRTDMEKDFIALDQDLFIQKYGLEDYAFEHIVYGNFNQKIIGGLHLLIGLYRRQQTSNLVIQEFVSYDSSIHSYFITDEKSGGSKSVCTVIDILLDDFVALVKSLNLNCVSKVVNVNVDFKDFQFMLWCNDEKVMTFYPRLQAASDWKPGYSMPVLYKYLNSPMERVSLWNYGKPVTLPTGCMMNVAKYTQLCQYLNTTTLAVPVNMRVLHLGAGSEKGVAPGSAVLRQWLPAGTILVDNDLYPFVSDSVATYFGDCITLPFDCQWDLIISDMYDPITKNIGEYNVSKDGFFTYICHMIRDKLALGGSVAIKITEFSWNAELYKLMGYFAFWTVFCTNANASSSEGFLIGINYLGKPKVEIDGNVMHANYLFWRNSTVWNGGAYSLFDMAKFPLKLAGTAVINLRADQINDMVYSLLEKGKLLVRDTNKEVFVGDSLVNVI</sequence>